<reference key="1">
    <citation type="journal article" date="1988" name="DNA">
        <title>The sequence of the human epidermal 58-kD (#5) type II keratin reveals an absence of 5' upstream sequence conservation between coexpressed epidermal keratins.</title>
        <authorList>
            <person name="Eckert R.L."/>
            <person name="Rorke E.A."/>
        </authorList>
    </citation>
    <scope>NUCLEOTIDE SEQUENCE [MRNA]</scope>
    <scope>VARIANTS ARG-79 AND THR-387</scope>
</reference>
<reference key="2">
    <citation type="journal article" date="1989" name="Mol. Cell. Biol.">
        <title>Isolation, sequence, and expression of a human keratin K5 gene: transcriptional regulation of keratins and insights into pairwise control.</title>
        <authorList>
            <person name="Lersch R."/>
            <person name="Stellmach V."/>
            <person name="Stocks X."/>
            <person name="Giudice G."/>
            <person name="Fuchs E."/>
        </authorList>
    </citation>
    <scope>NUCLEOTIDE SEQUENCE [GENOMIC DNA]</scope>
    <scope>VARIANT GLU-197</scope>
</reference>
<reference key="3">
    <citation type="journal article" date="2000" name="Biochem. Biophys. Res. Commun.">
        <title>Genomic organization and amplification of the human epidermal type II keratin genes K1 and K5.</title>
        <authorList>
            <person name="Whittock N.V."/>
            <person name="Eady R.A.J."/>
            <person name="McGrath J.A."/>
        </authorList>
    </citation>
    <scope>NUCLEOTIDE SEQUENCE [GENOMIC DNA]</scope>
    <scope>VARIANTS ARG-79 AND THR-387</scope>
</reference>
<reference key="4">
    <citation type="journal article" date="2004" name="Genome Res.">
        <title>The status, quality, and expansion of the NIH full-length cDNA project: the Mammalian Gene Collection (MGC).</title>
        <authorList>
            <consortium name="The MGC Project Team"/>
        </authorList>
    </citation>
    <scope>NUCLEOTIDE SEQUENCE [LARGE SCALE MRNA]</scope>
    <scope>VARIANTS GLY-528 AND SER-543</scope>
    <source>
        <tissue>Brain</tissue>
        <tissue>Pancreas</tissue>
    </source>
</reference>
<reference key="5">
    <citation type="journal article" date="1988" name="Mol. Cell. Biol.">
        <title>Sequence and expression of a type II keratin, K5, in human epidermal cells.</title>
        <authorList>
            <person name="Lersch R."/>
            <person name="Fuchs E."/>
        </authorList>
    </citation>
    <scope>NUCLEOTIDE SEQUENCE [MRNA] OF 83-590</scope>
    <scope>VARIANT GLU-197</scope>
</reference>
<reference key="6">
    <citation type="journal article" date="2004" name="Clin. Exp. Dermatol.">
        <title>A new keratin 5 mutation (K199T) in a family with Weber-Cockayne epidermolysis bullosa simplex.</title>
        <authorList>
            <person name="Xu Z."/>
            <person name="Dong H."/>
            <person name="Sun X."/>
            <person name="Zhu X."/>
            <person name="Yang Y."/>
        </authorList>
    </citation>
    <scope>NUCLEOTIDE SEQUENCE [MRNA] OF 186-256</scope>
    <scope>VARIANT EBS2C THR-199</scope>
</reference>
<reference key="7">
    <citation type="journal article" date="1988" name="J. Invest. Dermatol.">
        <title>Isolation and characterization of a cDNA clone coding for human epidermal keratin K5. Sequence of the carboxyterminal half of this keratin.</title>
        <authorList>
            <person name="Galup C."/>
            <person name="Darmon M.Y."/>
        </authorList>
    </citation>
    <scope>NUCLEOTIDE SEQUENCE [MRNA] OF 348-590</scope>
    <scope>VARIANT SER-543</scope>
</reference>
<reference key="8">
    <citation type="journal article" date="2000" name="J. Cell Sci.">
        <title>Interaction of plakophilins with desmoplakin and intermediate filament proteins: an in vitro analysis.</title>
        <authorList>
            <person name="Hofmann I."/>
            <person name="Mertens C."/>
            <person name="Brettel M."/>
            <person name="Nimmrich V."/>
            <person name="Schnoelzer M."/>
            <person name="Herrmann H."/>
        </authorList>
    </citation>
    <scope>INTERACTION WITH PKP1 AND PKP2</scope>
</reference>
<reference key="9">
    <citation type="journal article" date="2003" name="Nature">
        <title>Proteomic characterization of the human centrosome by protein correlation profiling.</title>
        <authorList>
            <person name="Andersen J.S."/>
            <person name="Wilkinson C.J."/>
            <person name="Mayor T."/>
            <person name="Mortensen P."/>
            <person name="Nigg E.A."/>
            <person name="Mann M."/>
        </authorList>
    </citation>
    <scope>IDENTIFICATION BY MASS SPECTROMETRY</scope>
    <source>
        <tissue>Lymphoblast</tissue>
    </source>
</reference>
<reference key="10">
    <citation type="journal article" date="2005" name="J. Cell Sci.">
        <title>Identification of trichoplein, a novel keratin filament-binding protein.</title>
        <authorList>
            <person name="Nishizawa M."/>
            <person name="Izawa I."/>
            <person name="Inoko A."/>
            <person name="Hayashi Y."/>
            <person name="Nagata K."/>
            <person name="Yokoyama T."/>
            <person name="Usukura J."/>
            <person name="Inagaki M."/>
        </authorList>
    </citation>
    <scope>INTERACTION WITH TCHP</scope>
</reference>
<reference key="11">
    <citation type="journal article" date="2011" name="BMC Syst. Biol.">
        <title>Initial characterization of the human central proteome.</title>
        <authorList>
            <person name="Burkard T.R."/>
            <person name="Planyavsky M."/>
            <person name="Kaupe I."/>
            <person name="Breitwieser F.P."/>
            <person name="Buerckstuemmer T."/>
            <person name="Bennett K.L."/>
            <person name="Superti-Furga G."/>
            <person name="Colinge J."/>
        </authorList>
    </citation>
    <scope>IDENTIFICATION BY MASS SPECTROMETRY [LARGE SCALE ANALYSIS]</scope>
</reference>
<reference key="12">
    <citation type="journal article" date="2014" name="J. Invest. Dermatol.">
        <title>Interaction of plectin with keratins 5 and 14: dependence on several plectin domains and keratin quaternary structure.</title>
        <authorList>
            <person name="Bouameur J.E."/>
            <person name="Favre B."/>
            <person name="Fontao L."/>
            <person name="Lingasamy P."/>
            <person name="Begre N."/>
            <person name="Borradori L."/>
        </authorList>
    </citation>
    <scope>IDENTIFICATION IN A COMPLEX WITH KRT14</scope>
    <scope>INTERACTION WITH KRT14 AND PLEC</scope>
</reference>
<reference key="13">
    <citation type="journal article" date="2014" name="J. Proteomics">
        <title>An enzyme assisted RP-RPLC approach for in-depth analysis of human liver phosphoproteome.</title>
        <authorList>
            <person name="Bian Y."/>
            <person name="Song C."/>
            <person name="Cheng K."/>
            <person name="Dong M."/>
            <person name="Wang F."/>
            <person name="Huang J."/>
            <person name="Sun D."/>
            <person name="Wang L."/>
            <person name="Ye M."/>
            <person name="Zou H."/>
        </authorList>
    </citation>
    <scope>IDENTIFICATION BY MASS SPECTROMETRY [LARGE SCALE ANALYSIS]</scope>
    <source>
        <tissue>Liver</tissue>
    </source>
</reference>
<reference key="14">
    <citation type="journal article" date="2015" name="Proteomics">
        <title>N-terminome analysis of the human mitochondrial proteome.</title>
        <authorList>
            <person name="Vaca Jacome A.S."/>
            <person name="Rabilloud T."/>
            <person name="Schaeffer-Reiss C."/>
            <person name="Rompais M."/>
            <person name="Ayoub D."/>
            <person name="Lane L."/>
            <person name="Bairoch A."/>
            <person name="Van Dorsselaer A."/>
            <person name="Carapito C."/>
        </authorList>
    </citation>
    <scope>IDENTIFICATION BY MASS SPECTROMETRY [LARGE SCALE ANALYSIS]</scope>
</reference>
<reference key="15">
    <citation type="journal article" date="2016" name="Hum. Mol. Genet.">
        <title>Keratin 12 missense mutation induces the unfolded protein response and apoptosis in Meesmann epithelial corneal dystrophy.</title>
        <authorList>
            <person name="Allen E.H."/>
            <person name="Courtney D.G."/>
            <person name="Atkinson S.D."/>
            <person name="Moore J.E."/>
            <person name="Mairs L."/>
            <person name="Poulsen E.T."/>
            <person name="Schiroli D."/>
            <person name="Maurizi E."/>
            <person name="Cole C."/>
            <person name="Hickerson R.P."/>
            <person name="James J."/>
            <person name="Murgatroyd H."/>
            <person name="Smith F.J."/>
            <person name="MacEwen C."/>
            <person name="Enghild J.J."/>
            <person name="Nesbit M.A."/>
            <person name="Leslie Pedrioli D.M."/>
            <person name="McLean W.H."/>
            <person name="Moore C.B."/>
        </authorList>
    </citation>
    <scope>TISSUE SPECIFICITY</scope>
</reference>
<reference key="16">
    <citation type="journal article" date="2018" name="J. Invest. Dermatol.">
        <title>A missense mutation within the helix termination motif of KRT25 causes autosomal dominant woolly hair/hypotrichosis.</title>
        <authorList>
            <person name="Yu X."/>
            <person name="Chen F."/>
            <person name="Ni C."/>
            <person name="Zhang G."/>
            <person name="Zheng L."/>
            <person name="Zhang J."/>
            <person name="Li C."/>
            <person name="Sandilands A."/>
            <person name="Yao Z."/>
            <person name="Li M."/>
        </authorList>
    </citation>
    <scope>SUBUNIT</scope>
</reference>
<reference evidence="63" key="17">
    <citation type="journal article" date="2012" name="Nat. Struct. Mol. Biol.">
        <title>Structural basis for heteromeric assembly and perinuclear organization of keratin filaments.</title>
        <authorList>
            <person name="Lee C.H."/>
            <person name="Kim M.S."/>
            <person name="Chung B.M."/>
            <person name="Leahy D.J."/>
            <person name="Coulombe P.A."/>
        </authorList>
    </citation>
    <scope>X-RAY CRYSTALLOGRAPHY (3.0 ANGSTROMS) OF 350-477 IN COMPLEX WITH KRT14</scope>
    <scope>SUBUNIT</scope>
</reference>
<reference evidence="64" key="18">
    <citation type="journal article" date="2020" name="Structure">
        <title>Structure-Function Analyses of a Keratin Heterotypic Complex Identify Specific Keratin Regions Involved in Intermediate Filament Assembly.</title>
        <authorList>
            <person name="Lee C.H."/>
            <person name="Kim M.S."/>
            <person name="Li S."/>
            <person name="Leahy D.J."/>
            <person name="Coulombe P.A."/>
        </authorList>
    </citation>
    <scope>X-RAY CRYSTALLOGRAPHY (2.60 ANGSTROMS) OF 379-476 IN COMPLEX WITH KRT14</scope>
    <scope>MUTAGENESIS OF GLU-399; GLN-411; ASN-412; GLU-422; GLU-437; GLN-440 AND GLN-444</scope>
</reference>
<reference key="19">
    <citation type="journal article" date="1992" name="Nature">
        <title>A mutation in the conserved helix termination peptide of keratin 5 in hereditary skin blistering.</title>
        <authorList>
            <person name="Lane E.B."/>
            <person name="Rugg E.L."/>
            <person name="Navsaria H.A."/>
            <person name="Leigh I.M."/>
            <person name="Heagerty A.H.M."/>
            <person name="Ishida-Yamamoto A."/>
            <person name="Eady R.A.J."/>
        </authorList>
    </citation>
    <scope>VARIANT EBS2A GLY-475</scope>
</reference>
<reference key="20">
    <citation type="journal article" date="1993" name="Hum. Mutat.">
        <title>Identification of a leucine-to-proline mutation in the keratin 5 gene in a family with the generalized Kobner type of epidermolysis bullosa simplex.</title>
        <authorList>
            <person name="Dong W."/>
            <person name="Ryynaenen M."/>
            <person name="Uitto J."/>
        </authorList>
    </citation>
    <scope>VARIANT EBS2B PRO-463</scope>
</reference>
<reference key="21">
    <citation type="journal article" date="1993" name="J. Invest. Dermatol.">
        <title>Allelic variations of human keratins K4 and K5 provide polymorphic markers within the type II keratin gene cluster on chromosome 12.</title>
        <authorList>
            <person name="Wanner R."/>
            <person name="Foerster H.-H."/>
            <person name="Tilmans I."/>
            <person name="Mischke D."/>
        </authorList>
    </citation>
    <scope>VARIANT GLU-138</scope>
</reference>
<reference key="22">
    <citation type="journal article" date="1993" name="J. Invest. Dermatol.">
        <title>Clustering of epidermolysis bullosa simplex mutations in relation to disease phenotype: data from Weber-Cockayne EBS.</title>
        <authorList>
            <person name="Smith F.J.D."/>
            <person name="Morley S.M."/>
            <person name="Rugg E.L."/>
            <person name="Navsaria H.A."/>
            <person name="Leigh I.M."/>
            <person name="Eady R.A.J."/>
            <person name="Tidman M.J."/>
            <person name="Lane E.B."/>
        </authorList>
    </citation>
    <scope>VARIANT EBS2A LYS-193</scope>
</reference>
<reference key="23">
    <citation type="journal article" date="1993" name="Nat. Genet.">
        <title>Missing links: Weber-Cockayne keratin mutations implicate the L12 linker domain in effective cytoskeleton function.</title>
        <authorList>
            <person name="Rugg E.L."/>
            <person name="Morley S.M."/>
            <person name="Smith F.J.D."/>
            <person name="Boxer M."/>
            <person name="Tidman M.J."/>
            <person name="Navsaria H.A."/>
            <person name="Leigh I.M."/>
            <person name="Lane E.B."/>
        </authorList>
    </citation>
    <scope>VARIANT EBS2C CYS-331</scope>
</reference>
<reference key="24">
    <citation type="journal article" date="1993" name="Proc. Natl. Acad. Sci. U.S.A.">
        <title>The genetic basis of Weber-Cockayne epidermolysis bullosa simplex.</title>
        <authorList>
            <person name="Chan Y.-M."/>
            <person name="Yu Q.-C."/>
            <person name="Fine J.-D."/>
            <person name="Fuchs E."/>
        </authorList>
    </citation>
    <scope>VARIANT EBS2C SER-161</scope>
</reference>
<reference key="25">
    <citation type="journal article" date="1994" name="J. Cell Sci.">
        <title>Mutations in the non-helical linker segment L1-2 of keratin 5 in patients with Weber-Cockayne epidermolysis bullosa simplex.</title>
        <authorList>
            <person name="Chan Y.-M."/>
            <person name="Yu Q.-C."/>
            <person name="LeBlanc-Straceski J."/>
            <person name="Christiano A."/>
            <person name="Pulkkinen L."/>
            <person name="Kucherlapati R.S."/>
            <person name="Uitto J."/>
            <person name="Fuchs E."/>
        </authorList>
    </citation>
    <scope>VARIANTS EBS2C THR-327 AND LYS-329</scope>
</reference>
<reference key="26">
    <citation type="journal article" date="1995" name="Am. J. Hum. Genet.">
        <title>Epidermolysis bullosa simplex: a keratin 5 mutation is a fully dominant allele in epidermal cytoskeleton function.</title>
        <authorList>
            <person name="Stephens K."/>
            <person name="Zlotogorski A."/>
            <person name="Smith L."/>
            <person name="Ehrlich P."/>
            <person name="Wijsman E.M."/>
            <person name="Livingston R.J."/>
            <person name="Sybert V.P."/>
        </authorList>
    </citation>
    <scope>VARIANT EBS2B ASN-173</scope>
</reference>
<reference key="27">
    <citation type="journal article" date="1995" name="Hum. Mol. Genet.">
        <title>Epidermolysis bullosa simplex (Weber-Cockayne) associated with a novel missense mutation of Asp328 to Val in linker 12 domain of keratin 5.</title>
        <authorList>
            <person name="Matsuki M."/>
            <person name="Hashimoto K."/>
            <person name="Yoshikawa K."/>
            <person name="Yasuno H."/>
            <person name="Yamanishi K."/>
        </authorList>
    </citation>
    <scope>VARIANT EBS2C VAL-328</scope>
</reference>
<reference key="28">
    <citation type="journal article" date="1996" name="Hum. Mutat.">
        <title>Three keratin gene mutations account for the majority of dominant simplex epidermolysis bullosa cases within the population of Ireland.</title>
        <authorList>
            <person name="Humphries M.M."/>
            <person name="Mansergh F.C."/>
            <person name="Kiang A.-S."/>
            <person name="Jordan S.A."/>
            <person name="Sheils D.M."/>
            <person name="Martin M.J."/>
            <person name="Farrar G.J."/>
            <person name="Kenna P.F."/>
            <person name="Young M.M."/>
            <person name="Humphries P."/>
        </authorList>
    </citation>
    <scope>VARIANTS EBS2C LYS-193 AND THR-327</scope>
</reference>
<reference key="29">
    <citation type="journal article" date="1996" name="J. Invest. Dermatol.">
        <title>A novel keratin K5 gene mutation in Dowling-Meara epidermolysis bullosa simplex.</title>
        <authorList>
            <person name="Nomura K."/>
            <person name="Shimizu H."/>
            <person name="Meng X."/>
            <person name="Umeki K."/>
            <person name="Tamai K."/>
            <person name="Sawamura D."/>
            <person name="Nagao K."/>
            <person name="Kawakami T."/>
            <person name="Nishikawa T."/>
            <person name="Hashimoto I."/>
        </authorList>
    </citation>
    <scope>VARIANT EBS2A PHE-175</scope>
</reference>
<reference key="30">
    <citation type="journal article" date="1996" name="Proc. Natl. Acad. Sci. U.S.A.">
        <title>The genetic basis of epidermolysis bullosa simplex with mottled pigmentation.</title>
        <authorList>
            <person name="Uttam J."/>
            <person name="Hutton M.E."/>
            <person name="Coulombe P.A."/>
            <person name="Anton-Lamprecht I."/>
            <person name="Yu Q.-C."/>
            <person name="Gedde-Dahl T. Jr."/>
            <person name="Fine J.-D."/>
            <person name="Fuchs E."/>
        </authorList>
    </citation>
    <scope>VARIANT EBS2F LEU-25</scope>
</reference>
<reference key="31">
    <citation type="journal article" date="1997" name="J. Invest. Dermatol.">
        <title>Primers for exon-specific amplification of the KRT5 gene: identification of novel and recurrent mutations in epidermolysis bullosa simplex patients.</title>
        <authorList>
            <person name="Stephens K."/>
            <person name="Ehrlich P."/>
            <person name="Weaver M."/>
            <person name="Le R."/>
            <person name="Spencer A."/>
            <person name="Sybert V.P."/>
        </authorList>
    </citation>
    <scope>VARIANTS EBS2A SER-176; SER-179 AND LYS-477</scope>
</reference>
<reference key="32">
    <citation type="journal article" date="1997" name="J. Invest. Dermatol.">
        <title>A novel mutation in the helix termination peptide of keratin 5 causing epidermolysis bullosa simplex Dowling-Meara.</title>
        <authorList>
            <person name="Irvine A.D."/>
            <person name="McKenna K.E."/>
            <person name="Bingham A."/>
            <person name="Nevin N.C."/>
            <person name="Hughes A.E."/>
        </authorList>
    </citation>
    <scope>VARIANT EBS2A THR-467</scope>
</reference>
<reference key="33">
    <citation type="journal article" date="1998" name="J. Invest. Dermatol.">
        <title>A novel mutation in the L12 domain of keratin 5 in the Koebner variant of epidermolysis bullosa simplex.</title>
        <authorList>
            <person name="Galligan P."/>
            <person name="Listwan P."/>
            <person name="Siller G.M."/>
            <person name="Rothnagel J.A."/>
        </authorList>
    </citation>
    <scope>VARIANT EBS2B ALA-323</scope>
</reference>
<reference key="34">
    <citation type="journal article" date="1998" name="J. Invest. Dermatol.">
        <title>Novel K5 and K14 mutations in German patients with the Weber-Cockayne variant of epidermolysis bullosa simplex.</title>
        <authorList>
            <person name="Mueller F.B."/>
            <person name="Kuester W."/>
            <person name="Bruckner-Tuderman L."/>
            <person name="Korge B.P."/>
        </authorList>
    </citation>
    <scope>VARIANTS EBS2C LEU-152; LYS-327 AND HIS-328</scope>
</reference>
<reference key="35">
    <citation type="journal article" date="1999" name="Am. J. Med. Genet.">
        <title>Epidermolysis bullosa simplex with mottled pigmentation: clinical aspects and confirmation of the P24L mutation in the KRT5 gene in further patients.</title>
        <authorList>
            <person name="Moog U."/>
            <person name="de Die-Smulders C.E.M."/>
            <person name="Scheffer H."/>
            <person name="van der Vlies P."/>
            <person name="Henquet C.J.M."/>
            <person name="Jonkman M.F."/>
        </authorList>
    </citation>
    <scope>VARIANT EBS2F LEU-25</scope>
</reference>
<reference key="36">
    <citation type="journal article" date="1999" name="J. Invest. Dermatol.">
        <title>Identification of novel and known mutations in the genes for keratin 5 and 14 in Danish patients with epidermolysis bullosa simplex: correlation between genotype and phenotype.</title>
        <authorList>
            <person name="Soerensen C.B."/>
            <person name="Ladekjaer-Mikkelsen A.-S."/>
            <person name="Andresen B.S."/>
            <person name="Brandrup F."/>
            <person name="Veien N.K."/>
            <person name="Buus S.K."/>
            <person name="Anton-Lamprecht I."/>
            <person name="Kruse T.A."/>
            <person name="Jensen P.K.A."/>
            <person name="Eiberg H."/>
            <person name="Bolund L."/>
            <person name="Gregersen N."/>
        </authorList>
    </citation>
    <scope>VARIANT EBS2A SER-176</scope>
    <scope>VARIANT EBS2B PRO-325</scope>
</reference>
<reference key="37">
    <citation type="journal article" date="2000" name="Br. J. Dermatol.">
        <title>Laryngeal involvement in the Dowling-Meara variant of epidermolysis bullosa simplex with keratin mutations of severely disruptive potential.</title>
        <authorList>
            <person name="Shemanko C.S."/>
            <person name="Horn H.M."/>
            <person name="Keohane S.G."/>
            <person name="Hepburn N."/>
            <person name="Kerr A.I.G."/>
            <person name="Atherton D.J."/>
            <person name="Tidman M.J."/>
            <person name="Lane E.B."/>
        </authorList>
    </citation>
    <scope>VARIANT EBS2A PRO-181</scope>
</reference>
<reference key="38">
    <citation type="journal article" date="2000" name="Hum. Hered.">
        <title>K5 D328E: a novel missense mutation in the linker 12 domain of keratin 5 associated with epidermolysis bullosa simplex (Weber-Cockayne).</title>
        <authorList>
            <person name="Liovic M."/>
            <person name="Podrumac B."/>
            <person name="Dragos V."/>
            <person name="Vouk K."/>
            <person name="Komel R."/>
        </authorList>
    </citation>
    <scope>VARIANT EBS2C GLU-328</scope>
</reference>
<reference key="39">
    <citation type="journal article" date="2001" name="J. Invest. Dermatol.">
        <title>A novel keratin 5 mutation (K5V186L) in a family with EBS-K: a conservative substitution can lead to development of different disease phenotypes.</title>
        <authorList>
            <person name="Liovic M."/>
            <person name="Stojan J."/>
            <person name="Bowden P.E."/>
            <person name="Gibbs D."/>
            <person name="Vahlquist A."/>
            <person name="Lane E.B."/>
            <person name="Komel R."/>
        </authorList>
    </citation>
    <scope>VARIANT EBS2B LEU-186</scope>
</reference>
<reference key="40">
    <citation type="journal article" date="2002" name="J. Biol. Chem.">
        <title>Dominant and recessive compound heterozygous mutations in epidermolysis bullosa simplex demonstrate the role of the stutter region in keratin intermediate filament assembly.</title>
        <authorList>
            <person name="Yasukawa K."/>
            <person name="Sawamura D."/>
            <person name="McMillan J.R."/>
            <person name="Nakamura H."/>
            <person name="Shimizu H."/>
        </authorList>
    </citation>
    <scope>VARIANT EBS2C LYS-170</scope>
    <scope>VARIANT EBS2D LYS-418</scope>
</reference>
<reference key="41">
    <citation type="journal article" date="2003" name="Arch. Dermatol.">
        <title>Epidermolysis bullosa simplex in Israel: clinical and genetic features.</title>
        <authorList>
            <person name="Ciubotaru D."/>
            <person name="Bergman R."/>
            <person name="Baty D."/>
            <person name="Indelman M."/>
            <person name="Pfendner E."/>
            <person name="Petronius D."/>
            <person name="Moualem H."/>
            <person name="Kanaan M."/>
            <person name="Ben Amitai D."/>
            <person name="McLean W.H.I."/>
            <person name="Uitto J."/>
            <person name="Sprecher E."/>
        </authorList>
    </citation>
    <scope>VARIANTS EBS2C LYS-167; PRO-311 AND ASP-324</scope>
</reference>
<reference key="42">
    <citation type="journal article" date="2003" name="Hum. Mutat.">
        <title>Mutation analysis of the entire keratin 5 and 14 genes in patients with epidermolysis bullosa simplex and identification of novel mutations.</title>
        <authorList>
            <person name="Schuilenga-Hut P.H.L."/>
            <person name="Vlies P."/>
            <person name="Jonkman M.F."/>
            <person name="Waanders E."/>
            <person name="Buys C.H.C.M."/>
            <person name="Scheffer H."/>
        </authorList>
    </citation>
    <scope>VARIANTS EBS2C GLU-404 AND ASP-438</scope>
    <scope>VARIANTS EBS2A LYS-475 AND LYS-477</scope>
</reference>
<reference key="43">
    <citation type="journal article" date="2003" name="J. Invest. Dermatol.">
        <title>A usual frameshift and delayed termination codon mutation in keratin 5 causes a novel type of epidermolysis bullosa simplex with migratory circinate erythema.</title>
        <authorList>
            <person name="Gu L.-H."/>
            <person name="Kim S.-C."/>
            <person name="Ichiki Y."/>
            <person name="Park J."/>
            <person name="Nagai M."/>
            <person name="Kitajima Y."/>
        </authorList>
    </citation>
    <scope>INVOLVEMENT IN EBS2E</scope>
</reference>
<reference key="44">
    <citation type="journal article" date="2004" name="Clin. Exp. Dermatol.">
        <title>A new mutation in the linker 12 domain of keratin 5 in a Chinese family with Weber-Cockayne epidermolysis bullosa simplex.</title>
        <authorList>
            <person name="Li J.-G."/>
            <person name="Feng J."/>
            <person name="Xiao S.-X."/>
            <person name="Ai Y.-L."/>
            <person name="Wang J.-M."/>
            <person name="Peng Z.-H."/>
        </authorList>
    </citation>
    <scope>VARIANT EBS2C GLY-328</scope>
</reference>
<reference key="45">
    <citation type="journal article" date="2004" name="Exp. Dermatol.">
        <title>A mutation (N177S) in the structurally conserved helix initiation peptide motif of keratin 5 causes a mild EBS phenotype.</title>
        <authorList>
            <person name="Liovic M."/>
            <person name="Bowden P.E."/>
            <person name="Marks R."/>
            <person name="Komel R."/>
        </authorList>
    </citation>
    <scope>VARIANT EBS2C SER-177</scope>
</reference>
<reference key="46">
    <citation type="journal article" date="2006" name="Am. J. Hum. Genet.">
        <title>Loss-of-function mutations in the keratin 5 gene lead to Dowling-Degos disease.</title>
        <authorList>
            <person name="Betz R.C."/>
            <person name="Planko L."/>
            <person name="Eigelshoven S."/>
            <person name="Hanneken S."/>
            <person name="Pasternack S.M."/>
            <person name="Buessow H."/>
            <person name="Bogaert K.V."/>
            <person name="Wenzel J."/>
            <person name="Braun-Falco M."/>
            <person name="Ruetten A."/>
            <person name="Rogers M.A."/>
            <person name="Ruzicka T."/>
            <person name="Noethen M.M."/>
            <person name="Magin T.M."/>
            <person name="Kruse R."/>
        </authorList>
    </citation>
    <scope>INVOLVEMENT IN DDD1</scope>
</reference>
<reference key="47">
    <citation type="journal article" date="2006" name="Br. J. Dermatol.">
        <title>Epidermolysis bullosa simplex in Japanese and Korean patients: genetic studies in 19 cases.</title>
        <authorList>
            <person name="Yasukawa K."/>
            <person name="Sawamura D."/>
            <person name="Goto M."/>
            <person name="Nakamura H."/>
            <person name="Jung S.-Y."/>
            <person name="Kim S.-C."/>
            <person name="Shimizu H."/>
        </authorList>
    </citation>
    <scope>VARIANTS EBS2C LEU-25; VAL-158 AND SER-352</scope>
    <scope>VARIANTS EBS2B ASP-143; MET-186; LEU-186; PRO-191 AND ASP-517</scope>
    <scope>VARIANTS EBS2A SER-176; LYS-475 AND LYS-477</scope>
    <scope>VARIANT EBS2F LEU-25</scope>
</reference>
<reference key="48">
    <citation type="journal article" date="2006" name="Hum. Mutat.">
        <title>Novel and recurrent mutations in keratin KRT5 and KRT14 genes in epidermolysis bullosa simplex: implications for disease phenotype and keratin filament assembly.</title>
        <authorList>
            <person name="Mueller F.B."/>
            <person name="Kuester W."/>
            <person name="Wodecki K."/>
            <person name="Almeida H. Jr."/>
            <person name="Bruckner-Tuderman L."/>
            <person name="Krieg T."/>
            <person name="Korge B.P."/>
            <person name="Arin M.J."/>
        </authorList>
    </citation>
    <scope>VARIANTS EBS2A LYS-168; PRO-169 AND PRO-469</scope>
    <scope>VARIANTS EBS2C LYS-190 AND HIS-331</scope>
</reference>
<reference key="49">
    <citation type="journal article" date="2007" name="J. Dermatol. Sci.">
        <title>Novel keratin 5 mutations in epidermolysis bullosa simplex: cases with unusual genotype-phenotype correlation.</title>
        <authorList>
            <person name="Oh S.W."/>
            <person name="Lee J.S."/>
            <person name="Kim M.Y."/>
            <person name="Kim S.C."/>
        </authorList>
    </citation>
    <scope>VARIANTS EBS2B PRO-150 AND ASP-466</scope>
</reference>
<reference key="50">
    <citation type="journal article" date="2009" name="Exp. Dermatol.">
        <title>A novel mutation (p.Thr198Ser) in the 1A helix of keratin 5 causes the localized variant of epidermolysis bullosa simplex.</title>
        <authorList>
            <person name="Bowden P.E."/>
            <person name="Knight A.G."/>
            <person name="Liovic M."/>
        </authorList>
    </citation>
    <scope>VARIANT EBS2C SER-198</scope>
</reference>
<reference key="51">
    <citation type="journal article" date="2009" name="J. Dermatol.">
        <title>Epidermolysis bullosa nevus arising in a patient with Dowling-Meara type epidermolysis bullosa simplex with a novel K5 mutation.</title>
        <authorList>
            <person name="Sugiyama-Fukamatsu H."/>
            <person name="Suzuki N."/>
            <person name="Nakanishi G."/>
            <person name="Iwatsuki K."/>
        </authorList>
    </citation>
    <scope>VARIANT EBS2A LYS-478</scope>
</reference>
<reference key="52">
    <citation type="journal article" date="2010" name="Br. J. Dermatol.">
        <title>Epidermolysis bullosa simplex due to KRT5 mutations: mutation-related differences in cellular fragility and the protective effects of trimethylamine N-oxide in cultured primary keratinocytes.</title>
        <authorList>
            <person name="Chamcheu J.C."/>
            <person name="Virtanen M."/>
            <person name="Navsaria H."/>
            <person name="Bowden P.E."/>
            <person name="Vahlquist A."/>
            <person name="Toermae H."/>
        </authorList>
    </citation>
    <scope>VARIANTS EBS2A MET-183 AND GLY-475</scope>
    <scope>SUBCELLULAR LOCATION</scope>
    <scope>TISSUE SPECIFICITY</scope>
</reference>
<reference key="53">
    <citation type="journal article" date="2011" name="Br. J. Dermatol.">
        <title>Mutations in KRT5 and KRT14 cause epidermolysis bullosa simplex in 75% of the patients.</title>
        <authorList>
            <person name="Bolling M.C."/>
            <person name="Lemmink H.H."/>
            <person name="Jansen G.H."/>
            <person name="Jonkman M.F."/>
        </authorList>
    </citation>
    <scope>VARIANT EBS2F LEU-25</scope>
    <scope>VARIANTS EBS2C PRO-149; PRO-151; GLY-170; SER-177; PRO-187; MET-199; GLY-323; LYS-329; HIS-331; GLU-404; ASN-443 AND ASP-476</scope>
    <scope>VARIANTS EBS2B ASP-180 AND ASP-438</scope>
    <scope>VARIANTS EBS2A PRO-180; PRO-191; MET-467 AND LYS-475</scope>
</reference>
<reference key="54">
    <citation type="journal article" date="2011" name="Br. J. Dermatol.">
        <title>Two novel recessive mutations in KRT14 identified in a cohort of 21 Spanish families with epidermolysis bullosa simplex.</title>
        <authorList>
            <person name="Garcia M."/>
            <person name="Santiago J.L."/>
            <person name="Terron A."/>
            <person name="Hernandez-Martin A."/>
            <person name="Vicente A."/>
            <person name="Fortuny C."/>
            <person name="De Lucas R."/>
            <person name="Lopez J.C."/>
            <person name="Cuadrado-Corrales N."/>
            <person name="Holguin A."/>
            <person name="Illera N."/>
            <person name="Duarte B."/>
            <person name="Sanchez-Jimeno C."/>
            <person name="Llames S."/>
            <person name="Garcia E."/>
            <person name="Ayuso C."/>
            <person name="Martinez-Santamaria L."/>
            <person name="Castiglia D."/>
            <person name="De Luca N."/>
            <person name="Torrelo A."/>
            <person name="Mechan D."/>
            <person name="Baty D."/>
            <person name="Zambruno G."/>
            <person name="Escamez M.J."/>
            <person name="Del Rio M."/>
        </authorList>
    </citation>
    <scope>VARIANTS EBS2C GLU-186; LYS-193; PRO-321; VAL-328 AND THR-428</scope>
    <scope>VARIANTS EBS2A SER-165 AND LYS-477</scope>
    <scope>VARIANT EBS2F LEU-25</scope>
    <scope>VARIANT EBS2B PRO-463</scope>
</reference>
<reference key="55">
    <citation type="journal article" date="2012" name="J. Eur. Acad. Dermatol. Venereol.">
        <title>A novel heterozygous nonsense mutation of keratin 5 in a Chinese family with Dowling-Degos disease.</title>
        <authorList>
            <person name="Guo L."/>
            <person name="Luo X."/>
            <person name="Zhao A."/>
            <person name="Huang H."/>
            <person name="Wei Z."/>
            <person name="Chen L."/>
            <person name="Qin S."/>
            <person name="Shao L."/>
            <person name="Xuan J."/>
            <person name="Feng G."/>
            <person name="Minghua C."/>
            <person name="Luan J."/>
            <person name="He L."/>
            <person name="Xing Q."/>
        </authorList>
    </citation>
    <scope>VARIANT DDD1 5-GLN--SER-590 DEL</scope>
</reference>
<reference key="56">
    <citation type="journal article" date="2012" name="J. Invest. Dermatol.">
        <title>Type 1 segmental Galli-Galli disease resulting from a previously unreported keratin 5 mutation.</title>
        <authorList>
            <person name="Arnold A.W."/>
            <person name="Kiritsi D."/>
            <person name="Happle R."/>
            <person name="Kohlhase J."/>
            <person name="Hausser I."/>
            <person name="Bruckner-Tuderman L."/>
            <person name="Has C."/>
            <person name="Itin P.H."/>
        </authorList>
    </citation>
    <scope>VARIANT DDD1 LEU-159</scope>
</reference>
<reference key="57">
    <citation type="journal article" date="2012" name="J. Invest. Dermatol.">
        <title>Digenic inheritance in epidermolysis bullosa simplex.</title>
        <authorList>
            <person name="Padalon-Brauch G."/>
            <person name="Ben Amitai D."/>
            <person name="Vodo D."/>
            <person name="Harel A."/>
            <person name="Sarig O."/>
            <person name="Sprecher E."/>
            <person name="Mashiah J."/>
        </authorList>
    </citation>
    <scope>VARIANT EBS2D THR-183</scope>
</reference>
<reference key="58">
    <citation type="journal article" date="2013" name="Acta Derm. Venereol.">
        <title>A novel keratin 5 mutation in an African family with epidermolysis bullosa simplex indicates the importance of the amino acid located at the boundary site between the H1 and coil 1A domains.</title>
        <authorList>
            <person name="Shinkuma S."/>
            <person name="Nishie W."/>
            <person name="Jacyk W.K."/>
            <person name="Natsuga K."/>
            <person name="Ujiie H."/>
            <person name="Nakamura H."/>
            <person name="Akiyama M."/>
            <person name="Shimizu H."/>
        </authorList>
    </citation>
    <scope>VARIANT EBS2B ASP-168</scope>
</reference>
<reference key="59">
    <citation type="journal article" date="2016" name="J. Appl. Genet.">
        <title>Novel sporadic and recurrent mutations in KRT5 and KRT14 genes in Polish epidermolysis bullosa simplex patients: further insights into epidemiology and genotype-phenotype correlation.</title>
        <authorList>
            <person name="Wertheim-Tysarowska K."/>
            <person name="Oldak M."/>
            <person name="Giza A."/>
            <person name="Kutkowska-Kazmierczak A."/>
            <person name="Sota J."/>
            <person name="Przybylska D."/>
            <person name="Wozniak K."/>
            <person name="Sniegorska D."/>
            <person name="Niepokoj K."/>
            <person name="Sobczynska-Tomaszewska A."/>
            <person name="Rygiel A.M."/>
            <person name="Ploski R."/>
            <person name="Bal J."/>
            <person name="Kowalewski C."/>
        </authorList>
    </citation>
    <scope>VARIANT EBS2F LEU-25</scope>
    <scope>VARIANTS EBS2B ALA-143; LYS-170 AND MET-186</scope>
    <scope>VARIANTS EPIDERMOLYSIS BULLOSA SIMPLEX PHE-143; LYS-190; MET-203; 470-TYR--SER-590 DEL AND GLY-477</scope>
    <scope>VARIANT EBS2A 144-THR-VAL-145 DEL</scope>
    <scope>VARIANTS EBS2C TYR-146; LYS-170; PHE-325; HIS-471 AND ASP-476</scope>
</reference>
<reference key="60">
    <citation type="journal article" date="2019" name="Exp. Dermatol.">
        <title>A novel de novo mutation p.Ala428Asp in KRT5 gene as a cause of localized epidermolysis bullosa simplex.</title>
        <authorList>
            <person name="Stawczyk-Macieja M."/>
            <person name="Wertheim-Tysarowska K."/>
            <person name="Jakubowski R."/>
            <person name="Szczerkowska-Dobosz A."/>
            <person name="Krygier M."/>
            <person name="Wilkowska A."/>
            <person name="Sawicka J."/>
            <person name="Nowak W."/>
            <person name="Bal J."/>
            <person name="Nowicki R."/>
        </authorList>
    </citation>
    <scope>VARIANT EBS2C ASP-428</scope>
</reference>
<reference key="61">
    <citation type="journal article" date="2019" name="Matrix Biol.">
        <title>Biallelic KRT5 mutations in autosomal recessive epidermolysis bullosa simplex, including a complete human keratin 5 'knock-out'.</title>
        <authorList>
            <person name="Vahidnezhad H."/>
            <person name="Youssefian L."/>
            <person name="Daneshpazhooh M."/>
            <person name="Mahmoudi H."/>
            <person name="Kariminejad A."/>
            <person name="Fischer J."/>
            <person name="Christiansen J."/>
            <person name="Schneider H."/>
            <person name="Guy A."/>
            <person name="Liu L."/>
            <person name="McGrath J.A."/>
            <person name="Has C."/>
            <person name="Uitto J."/>
        </authorList>
    </citation>
    <scope>TISSUE SPECIFICITY</scope>
    <scope>VARIANTS EBS2D ASN-158 AND LYS-170</scope>
</reference>
<protein>
    <recommendedName>
        <fullName>Keratin, type II cytoskeletal 5</fullName>
    </recommendedName>
    <alternativeName>
        <fullName>58 kDa cytokeratin</fullName>
    </alternativeName>
    <alternativeName>
        <fullName>Cytokeratin-5</fullName>
        <shortName>CK-5</shortName>
    </alternativeName>
    <alternativeName>
        <fullName>Keratin-5</fullName>
        <shortName>K5</shortName>
    </alternativeName>
    <alternativeName>
        <fullName>Type-II keratin Kb5</fullName>
    </alternativeName>
</protein>
<evidence type="ECO:0000250" key="1">
    <source>
        <dbReference type="UniProtKB" id="Q6P6Q2"/>
    </source>
</evidence>
<evidence type="ECO:0000250" key="2">
    <source>
        <dbReference type="UniProtKB" id="Q922U2"/>
    </source>
</evidence>
<evidence type="ECO:0000255" key="3">
    <source>
        <dbReference type="PROSITE-ProRule" id="PRU01188"/>
    </source>
</evidence>
<evidence type="ECO:0000256" key="4">
    <source>
        <dbReference type="SAM" id="MobiDB-lite"/>
    </source>
</evidence>
<evidence type="ECO:0000269" key="5">
    <source>
    </source>
</evidence>
<evidence type="ECO:0000269" key="6">
    <source>
    </source>
</evidence>
<evidence type="ECO:0000269" key="7">
    <source>
    </source>
</evidence>
<evidence type="ECO:0000269" key="8">
    <source>
    </source>
</evidence>
<evidence type="ECO:0000269" key="9">
    <source>
    </source>
</evidence>
<evidence type="ECO:0000269" key="10">
    <source>
    </source>
</evidence>
<evidence type="ECO:0000269" key="11">
    <source>
    </source>
</evidence>
<evidence type="ECO:0000269" key="12">
    <source>
    </source>
</evidence>
<evidence type="ECO:0000269" key="13">
    <source>
    </source>
</evidence>
<evidence type="ECO:0000269" key="14">
    <source>
    </source>
</evidence>
<evidence type="ECO:0000269" key="15">
    <source>
    </source>
</evidence>
<evidence type="ECO:0000269" key="16">
    <source>
    </source>
</evidence>
<evidence type="ECO:0000269" key="17">
    <source>
    </source>
</evidence>
<evidence type="ECO:0000269" key="18">
    <source>
    </source>
</evidence>
<evidence type="ECO:0000269" key="19">
    <source>
    </source>
</evidence>
<evidence type="ECO:0000269" key="20">
    <source>
    </source>
</evidence>
<evidence type="ECO:0000269" key="21">
    <source>
    </source>
</evidence>
<evidence type="ECO:0000269" key="22">
    <source>
    </source>
</evidence>
<evidence type="ECO:0000269" key="23">
    <source>
    </source>
</evidence>
<evidence type="ECO:0000269" key="24">
    <source>
    </source>
</evidence>
<evidence type="ECO:0000269" key="25">
    <source>
    </source>
</evidence>
<evidence type="ECO:0000269" key="26">
    <source>
    </source>
</evidence>
<evidence type="ECO:0000269" key="27">
    <source>
    </source>
</evidence>
<evidence type="ECO:0000269" key="28">
    <source>
    </source>
</evidence>
<evidence type="ECO:0000269" key="29">
    <source>
    </source>
</evidence>
<evidence type="ECO:0000269" key="30">
    <source>
    </source>
</evidence>
<evidence type="ECO:0000269" key="31">
    <source>
    </source>
</evidence>
<evidence type="ECO:0000269" key="32">
    <source>
    </source>
</evidence>
<evidence type="ECO:0000269" key="33">
    <source>
    </source>
</evidence>
<evidence type="ECO:0000269" key="34">
    <source>
    </source>
</evidence>
<evidence type="ECO:0000269" key="35">
    <source>
    </source>
</evidence>
<evidence type="ECO:0000269" key="36">
    <source>
    </source>
</evidence>
<evidence type="ECO:0000269" key="37">
    <source>
    </source>
</evidence>
<evidence type="ECO:0000269" key="38">
    <source>
    </source>
</evidence>
<evidence type="ECO:0000269" key="39">
    <source>
    </source>
</evidence>
<evidence type="ECO:0000269" key="40">
    <source>
    </source>
</evidence>
<evidence type="ECO:0000269" key="41">
    <source>
    </source>
</evidence>
<evidence type="ECO:0000269" key="42">
    <source>
    </source>
</evidence>
<evidence type="ECO:0000269" key="43">
    <source>
    </source>
</evidence>
<evidence type="ECO:0000269" key="44">
    <source>
    </source>
</evidence>
<evidence type="ECO:0000269" key="45">
    <source>
    </source>
</evidence>
<evidence type="ECO:0000269" key="46">
    <source>
    </source>
</evidence>
<evidence type="ECO:0000269" key="47">
    <source>
    </source>
</evidence>
<evidence type="ECO:0000269" key="48">
    <source>
    </source>
</evidence>
<evidence type="ECO:0000269" key="49">
    <source>
    </source>
</evidence>
<evidence type="ECO:0000269" key="50">
    <source>
    </source>
</evidence>
<evidence type="ECO:0000269" key="51">
    <source>
    </source>
</evidence>
<evidence type="ECO:0000269" key="52">
    <source>
    </source>
</evidence>
<evidence type="ECO:0000269" key="53">
    <source>
    </source>
</evidence>
<evidence type="ECO:0000269" key="54">
    <source>
    </source>
</evidence>
<evidence type="ECO:0000269" key="55">
    <source>
    </source>
</evidence>
<evidence type="ECO:0000269" key="56">
    <source>
    </source>
</evidence>
<evidence type="ECO:0000269" key="57">
    <source>
    </source>
</evidence>
<evidence type="ECO:0000269" key="58">
    <source>
    </source>
</evidence>
<evidence type="ECO:0000269" key="59">
    <source>
    </source>
</evidence>
<evidence type="ECO:0000269" key="60">
    <source>
    </source>
</evidence>
<evidence type="ECO:0000269" key="61">
    <source ref="22"/>
</evidence>
<evidence type="ECO:0000305" key="62"/>
<evidence type="ECO:0000312" key="63">
    <source>
        <dbReference type="PDB" id="3TNU"/>
    </source>
</evidence>
<evidence type="ECO:0000312" key="64">
    <source>
        <dbReference type="PDB" id="6JFV"/>
    </source>
</evidence>
<evidence type="ECO:0007829" key="65">
    <source>
        <dbReference type="PDB" id="6JFV"/>
    </source>
</evidence>
<dbReference type="EMBL" id="M21389">
    <property type="protein sequence ID" value="AAA36143.1"/>
    <property type="molecule type" value="mRNA"/>
</dbReference>
<dbReference type="EMBL" id="M28496">
    <property type="status" value="NOT_ANNOTATED_CDS"/>
    <property type="molecule type" value="Genomic_DNA"/>
</dbReference>
<dbReference type="EMBL" id="AF274874">
    <property type="protein sequence ID" value="AAF97931.1"/>
    <property type="molecule type" value="Genomic_DNA"/>
</dbReference>
<dbReference type="EMBL" id="BC024292">
    <property type="protein sequence ID" value="AAH24292.1"/>
    <property type="molecule type" value="mRNA"/>
</dbReference>
<dbReference type="EMBL" id="BC042132">
    <property type="protein sequence ID" value="AAH42132.1"/>
    <property type="molecule type" value="mRNA"/>
</dbReference>
<dbReference type="EMBL" id="BC071906">
    <property type="protein sequence ID" value="AAH71906.1"/>
    <property type="molecule type" value="mRNA"/>
</dbReference>
<dbReference type="EMBL" id="M19723">
    <property type="protein sequence ID" value="AAA36145.1"/>
    <property type="molecule type" value="mRNA"/>
</dbReference>
<dbReference type="EMBL" id="AY373434">
    <property type="protein sequence ID" value="AAQ81588.1"/>
    <property type="molecule type" value="mRNA"/>
</dbReference>
<dbReference type="CCDS" id="CCDS8830.1"/>
<dbReference type="PIR" id="A29904">
    <property type="entry name" value="A29904"/>
</dbReference>
<dbReference type="RefSeq" id="NP_000415.2">
    <property type="nucleotide sequence ID" value="NM_000424.4"/>
</dbReference>
<dbReference type="PDB" id="3TNU">
    <property type="method" value="X-ray"/>
    <property type="resolution" value="3.00 A"/>
    <property type="chains" value="B=350-477"/>
</dbReference>
<dbReference type="PDB" id="6JFV">
    <property type="method" value="X-ray"/>
    <property type="resolution" value="2.60 A"/>
    <property type="chains" value="B/D=379-476"/>
</dbReference>
<dbReference type="PDBsum" id="3TNU"/>
<dbReference type="PDBsum" id="6JFV"/>
<dbReference type="SMR" id="P13647"/>
<dbReference type="BioGRID" id="110050">
    <property type="interactions" value="188"/>
</dbReference>
<dbReference type="ComplexPortal" id="CPX-888">
    <property type="entry name" value="Keratin-5 - Keratin-14 dimer complex"/>
</dbReference>
<dbReference type="CORUM" id="P13647"/>
<dbReference type="DIP" id="DIP-39N"/>
<dbReference type="FunCoup" id="P13647">
    <property type="interactions" value="360"/>
</dbReference>
<dbReference type="IntAct" id="P13647">
    <property type="interactions" value="59"/>
</dbReference>
<dbReference type="MINT" id="P13647"/>
<dbReference type="STRING" id="9606.ENSP00000252242"/>
<dbReference type="DrugBank" id="DB01593">
    <property type="generic name" value="Zinc"/>
</dbReference>
<dbReference type="DrugBank" id="DB14487">
    <property type="generic name" value="Zinc acetate"/>
</dbReference>
<dbReference type="Allergome" id="415">
    <property type="allergen name" value="Hom s 5"/>
</dbReference>
<dbReference type="GlyGen" id="P13647">
    <property type="glycosylation" value="2 sites, 1 O-linked glycan (1 site)"/>
</dbReference>
<dbReference type="iPTMnet" id="P13647"/>
<dbReference type="PhosphoSitePlus" id="P13647"/>
<dbReference type="SwissPalm" id="P13647"/>
<dbReference type="BioMuta" id="KRT5"/>
<dbReference type="DMDM" id="143811411"/>
<dbReference type="CPTAC" id="CPTAC-5842"/>
<dbReference type="CPTAC" id="CPTAC-5861"/>
<dbReference type="CPTAC" id="CPTAC-5867"/>
<dbReference type="CPTAC" id="CPTAC-5886"/>
<dbReference type="jPOST" id="P13647"/>
<dbReference type="MassIVE" id="P13647"/>
<dbReference type="PaxDb" id="9606-ENSP00000252242"/>
<dbReference type="PeptideAtlas" id="P13647"/>
<dbReference type="PRIDE" id="P13647"/>
<dbReference type="ProteomicsDB" id="52954"/>
<dbReference type="Antibodypedia" id="3501">
    <property type="antibodies" value="1630 antibodies from 52 providers"/>
</dbReference>
<dbReference type="CPTC" id="P13647">
    <property type="antibodies" value="2 antibodies"/>
</dbReference>
<dbReference type="DNASU" id="3852"/>
<dbReference type="Ensembl" id="ENST00000252242.9">
    <property type="protein sequence ID" value="ENSP00000252242.4"/>
    <property type="gene ID" value="ENSG00000186081.12"/>
</dbReference>
<dbReference type="GeneID" id="3852"/>
<dbReference type="KEGG" id="hsa:3852"/>
<dbReference type="MANE-Select" id="ENST00000252242.9">
    <property type="protein sequence ID" value="ENSP00000252242.4"/>
    <property type="RefSeq nucleotide sequence ID" value="NM_000424.4"/>
    <property type="RefSeq protein sequence ID" value="NP_000415.2"/>
</dbReference>
<dbReference type="UCSC" id="uc001san.4">
    <property type="organism name" value="human"/>
</dbReference>
<dbReference type="AGR" id="HGNC:6442"/>
<dbReference type="CTD" id="3852"/>
<dbReference type="DisGeNET" id="3852"/>
<dbReference type="GeneCards" id="KRT5"/>
<dbReference type="GeneReviews" id="KRT5"/>
<dbReference type="HGNC" id="HGNC:6442">
    <property type="gene designation" value="KRT5"/>
</dbReference>
<dbReference type="HPA" id="ENSG00000186081">
    <property type="expression patterns" value="Group enriched (esophagus, skin, vagina)"/>
</dbReference>
<dbReference type="MalaCards" id="KRT5"/>
<dbReference type="MIM" id="131960">
    <property type="type" value="phenotype"/>
</dbReference>
<dbReference type="MIM" id="148040">
    <property type="type" value="gene"/>
</dbReference>
<dbReference type="MIM" id="179850">
    <property type="type" value="phenotype"/>
</dbReference>
<dbReference type="MIM" id="609352">
    <property type="type" value="phenotype"/>
</dbReference>
<dbReference type="MIM" id="619555">
    <property type="type" value="phenotype"/>
</dbReference>
<dbReference type="MIM" id="619588">
    <property type="type" value="phenotype"/>
</dbReference>
<dbReference type="MIM" id="619594">
    <property type="type" value="phenotype"/>
</dbReference>
<dbReference type="MIM" id="619599">
    <property type="type" value="phenotype"/>
</dbReference>
<dbReference type="neXtProt" id="NX_P13647"/>
<dbReference type="OpenTargets" id="ENSG00000186081"/>
<dbReference type="Orphanet" id="79399">
    <property type="disease" value="Autosomal dominant generalized epidermolysis bullosa simplex, intermediate form"/>
</dbReference>
<dbReference type="Orphanet" id="79396">
    <property type="disease" value="Autosomal dominant generalized epidermolysis bullosa simplex, severe form"/>
</dbReference>
<dbReference type="Orphanet" id="79145">
    <property type="disease" value="Dowling-Degos disease"/>
</dbReference>
<dbReference type="Orphanet" id="158681">
    <property type="disease" value="Epidermolysis bullosa simplex with circinate migratory erythema"/>
</dbReference>
<dbReference type="Orphanet" id="79397">
    <property type="disease" value="Epidermolysis bullosa simplex with mottled pigmentation"/>
</dbReference>
<dbReference type="Orphanet" id="79400">
    <property type="disease" value="Localized epidermolysis bullosa simplex"/>
</dbReference>
<dbReference type="PharmGKB" id="PA30230"/>
<dbReference type="VEuPathDB" id="HostDB:ENSG00000186081"/>
<dbReference type="eggNOG" id="ENOG502QURK">
    <property type="taxonomic scope" value="Eukaryota"/>
</dbReference>
<dbReference type="GeneTree" id="ENSGT00940000160458"/>
<dbReference type="HOGENOM" id="CLU_012560_6_1_1"/>
<dbReference type="InParanoid" id="P13647"/>
<dbReference type="OMA" id="SWYQTKX"/>
<dbReference type="OrthoDB" id="2441647at2759"/>
<dbReference type="PAN-GO" id="P13647">
    <property type="GO annotations" value="4 GO annotations based on evolutionary models"/>
</dbReference>
<dbReference type="PhylomeDB" id="P13647"/>
<dbReference type="TreeFam" id="TF317854"/>
<dbReference type="PathwayCommons" id="P13647"/>
<dbReference type="Reactome" id="R-HSA-446107">
    <property type="pathway name" value="Type I hemidesmosome assembly"/>
</dbReference>
<dbReference type="Reactome" id="R-HSA-6805567">
    <property type="pathway name" value="Keratinization"/>
</dbReference>
<dbReference type="Reactome" id="R-HSA-6809371">
    <property type="pathway name" value="Formation of the cornified envelope"/>
</dbReference>
<dbReference type="Reactome" id="R-HSA-9725554">
    <property type="pathway name" value="Differentiation of Keratinocytes in Interfollicular Epidermis in Mammalian Skin"/>
</dbReference>
<dbReference type="SignaLink" id="P13647"/>
<dbReference type="SIGNOR" id="P13647"/>
<dbReference type="BioGRID-ORCS" id="3852">
    <property type="hits" value="12 hits in 1156 CRISPR screens"/>
</dbReference>
<dbReference type="ChiTaRS" id="KRT5">
    <property type="organism name" value="human"/>
</dbReference>
<dbReference type="EvolutionaryTrace" id="P13647"/>
<dbReference type="GeneWiki" id="Keratin_5"/>
<dbReference type="GenomeRNAi" id="3852"/>
<dbReference type="Pharos" id="P13647">
    <property type="development level" value="Tbio"/>
</dbReference>
<dbReference type="PRO" id="PR:P13647"/>
<dbReference type="Proteomes" id="UP000005640">
    <property type="component" value="Chromosome 12"/>
</dbReference>
<dbReference type="RNAct" id="P13647">
    <property type="molecule type" value="protein"/>
</dbReference>
<dbReference type="Bgee" id="ENSG00000186081">
    <property type="expression patterns" value="Expressed in lower esophagus mucosa and 132 other cell types or tissues"/>
</dbReference>
<dbReference type="ExpressionAtlas" id="P13647">
    <property type="expression patterns" value="baseline and differential"/>
</dbReference>
<dbReference type="GO" id="GO:0005737">
    <property type="term" value="C:cytoplasm"/>
    <property type="evidence" value="ECO:0000314"/>
    <property type="project" value="UniProtKB"/>
</dbReference>
<dbReference type="GO" id="GO:0005829">
    <property type="term" value="C:cytosol"/>
    <property type="evidence" value="ECO:0000304"/>
    <property type="project" value="Reactome"/>
</dbReference>
<dbReference type="GO" id="GO:0070062">
    <property type="term" value="C:extracellular exosome"/>
    <property type="evidence" value="ECO:0007005"/>
    <property type="project" value="UniProtKB"/>
</dbReference>
<dbReference type="GO" id="GO:0005882">
    <property type="term" value="C:intermediate filament"/>
    <property type="evidence" value="ECO:0000314"/>
    <property type="project" value="BHF-UCL"/>
</dbReference>
<dbReference type="GO" id="GO:0045095">
    <property type="term" value="C:keratin filament"/>
    <property type="evidence" value="ECO:0000314"/>
    <property type="project" value="MGI"/>
</dbReference>
<dbReference type="GO" id="GO:0016020">
    <property type="term" value="C:membrane"/>
    <property type="evidence" value="ECO:0007005"/>
    <property type="project" value="UniProtKB"/>
</dbReference>
<dbReference type="GO" id="GO:0005634">
    <property type="term" value="C:nucleus"/>
    <property type="evidence" value="ECO:0007005"/>
    <property type="project" value="UniProtKB"/>
</dbReference>
<dbReference type="GO" id="GO:0097110">
    <property type="term" value="F:scaffold protein binding"/>
    <property type="evidence" value="ECO:0000353"/>
    <property type="project" value="BHF-UCL"/>
</dbReference>
<dbReference type="GO" id="GO:0005200">
    <property type="term" value="F:structural constituent of cytoskeleton"/>
    <property type="evidence" value="ECO:0000304"/>
    <property type="project" value="ProtInc"/>
</dbReference>
<dbReference type="GO" id="GO:0030280">
    <property type="term" value="F:structural constituent of skin epidermis"/>
    <property type="evidence" value="ECO:0000318"/>
    <property type="project" value="GO_Central"/>
</dbReference>
<dbReference type="GO" id="GO:0008544">
    <property type="term" value="P:epidermis development"/>
    <property type="evidence" value="ECO:0000304"/>
    <property type="project" value="ProtInc"/>
</dbReference>
<dbReference type="GO" id="GO:0045109">
    <property type="term" value="P:intermediate filament organization"/>
    <property type="evidence" value="ECO:0000318"/>
    <property type="project" value="GO_Central"/>
</dbReference>
<dbReference type="GO" id="GO:0045107">
    <property type="term" value="P:intermediate filament polymerization"/>
    <property type="evidence" value="ECO:0000250"/>
    <property type="project" value="UniProtKB"/>
</dbReference>
<dbReference type="GO" id="GO:0031424">
    <property type="term" value="P:keratinization"/>
    <property type="evidence" value="ECO:0000318"/>
    <property type="project" value="GO_Central"/>
</dbReference>
<dbReference type="GO" id="GO:0030334">
    <property type="term" value="P:regulation of cell migration"/>
    <property type="evidence" value="ECO:0000250"/>
    <property type="project" value="UniProtKB"/>
</dbReference>
<dbReference type="GO" id="GO:0032880">
    <property type="term" value="P:regulation of protein localization"/>
    <property type="evidence" value="ECO:0000250"/>
    <property type="project" value="UniProtKB"/>
</dbReference>
<dbReference type="GO" id="GO:0009612">
    <property type="term" value="P:response to mechanical stimulus"/>
    <property type="evidence" value="ECO:0000250"/>
    <property type="project" value="UniProtKB"/>
</dbReference>
<dbReference type="DisProt" id="DP02606"/>
<dbReference type="FunFam" id="1.20.5.1160:FF:000001">
    <property type="entry name" value="Keratin type II"/>
    <property type="match status" value="1"/>
</dbReference>
<dbReference type="FunFam" id="1.20.5.170:FF:000004">
    <property type="entry name" value="Keratin, type II cytoskeletal 5"/>
    <property type="match status" value="1"/>
</dbReference>
<dbReference type="FunFam" id="1.20.5.500:FF:000001">
    <property type="entry name" value="Type II keratin 23"/>
    <property type="match status" value="1"/>
</dbReference>
<dbReference type="Gene3D" id="1.20.5.170">
    <property type="match status" value="1"/>
</dbReference>
<dbReference type="Gene3D" id="1.20.5.500">
    <property type="entry name" value="Single helix bin"/>
    <property type="match status" value="1"/>
</dbReference>
<dbReference type="Gene3D" id="1.20.5.1160">
    <property type="entry name" value="Vasodilator-stimulated phosphoprotein"/>
    <property type="match status" value="1"/>
</dbReference>
<dbReference type="InterPro" id="IPR018039">
    <property type="entry name" value="IF_conserved"/>
</dbReference>
<dbReference type="InterPro" id="IPR039008">
    <property type="entry name" value="IF_rod_dom"/>
</dbReference>
<dbReference type="InterPro" id="IPR032444">
    <property type="entry name" value="Keratin_2_head"/>
</dbReference>
<dbReference type="InterPro" id="IPR003054">
    <property type="entry name" value="Keratin_II"/>
</dbReference>
<dbReference type="PANTHER" id="PTHR45616">
    <property type="entry name" value="GATA-TYPE DOMAIN-CONTAINING PROTEIN"/>
    <property type="match status" value="1"/>
</dbReference>
<dbReference type="PANTHER" id="PTHR45616:SF32">
    <property type="entry name" value="KERATIN, TYPE II CYTOSKELETAL 5"/>
    <property type="match status" value="1"/>
</dbReference>
<dbReference type="Pfam" id="PF00038">
    <property type="entry name" value="Filament"/>
    <property type="match status" value="1"/>
</dbReference>
<dbReference type="Pfam" id="PF16208">
    <property type="entry name" value="Keratin_2_head"/>
    <property type="match status" value="1"/>
</dbReference>
<dbReference type="PRINTS" id="PR01276">
    <property type="entry name" value="TYPE2KERATIN"/>
</dbReference>
<dbReference type="SMART" id="SM01391">
    <property type="entry name" value="Filament"/>
    <property type="match status" value="1"/>
</dbReference>
<dbReference type="SUPFAM" id="SSF64593">
    <property type="entry name" value="Intermediate filament protein, coiled coil region"/>
    <property type="match status" value="3"/>
</dbReference>
<dbReference type="PROSITE" id="PS00226">
    <property type="entry name" value="IF_ROD_1"/>
    <property type="match status" value="1"/>
</dbReference>
<dbReference type="PROSITE" id="PS51842">
    <property type="entry name" value="IF_ROD_2"/>
    <property type="match status" value="1"/>
</dbReference>
<organism>
    <name type="scientific">Homo sapiens</name>
    <name type="common">Human</name>
    <dbReference type="NCBI Taxonomy" id="9606"/>
    <lineage>
        <taxon>Eukaryota</taxon>
        <taxon>Metazoa</taxon>
        <taxon>Chordata</taxon>
        <taxon>Craniata</taxon>
        <taxon>Vertebrata</taxon>
        <taxon>Euteleostomi</taxon>
        <taxon>Mammalia</taxon>
        <taxon>Eutheria</taxon>
        <taxon>Euarchontoglires</taxon>
        <taxon>Primates</taxon>
        <taxon>Haplorrhini</taxon>
        <taxon>Catarrhini</taxon>
        <taxon>Hominidae</taxon>
        <taxon>Homo</taxon>
    </lineage>
</organism>
<name>K2C5_HUMAN</name>
<comment type="function">
    <text evidence="2">Required for the formation of keratin intermediate filaments in the basal epidermis and maintenance of the skin barrier in response to mechanical stress (By similarity). Regulates the recruitment of Langerhans cells to the epidermis, potentially by modulation of the abundance of macrophage chemotactic cytokines, macrophage inflammatory cytokines and CTNND1 localization in keratinocytes (By similarity).</text>
</comment>
<comment type="subunit">
    <text evidence="2 8 20 32 39 42 45">Heterodimer of a type I and a type II keratin (PubMed:22705788, PubMed:31995743). Heterodimer with type I keratin KRT25 leading to the formation of keratin intermediate filament (KIF) network (PubMed:28899683). Forms a heterodimer (via 2B domains) with KRT14 (via 2B domains) (PubMed:22705788, PubMed:24940650, PubMed:31995743). Interacts with PLEC isoform 1C, when in a heterodimer with KRT14 (PubMed:24940650). Interacts with TCHP (PubMed:15731013). Interacts with EPPK1 (By similarity). Interacts with AMELX (By similarity). Interacts with PKP1 (via N-terminus) and PKP2 (PubMed:10852826).</text>
</comment>
<comment type="interaction">
    <interactant intactId="EBI-702187">
        <id>P13647</id>
    </interactant>
    <interactant intactId="EBI-1633210">
        <id>P18054</id>
        <label>ALOX12</label>
    </interactant>
    <organismsDiffer>false</organismsDiffer>
    <experiments>7</experiments>
</comment>
<comment type="interaction">
    <interactant intactId="EBI-702187">
        <id>P13647</id>
    </interactant>
    <interactant intactId="EBI-6509505">
        <id>Q0VD86</id>
        <label>INCA1</label>
    </interactant>
    <organismsDiffer>false</organismsDiffer>
    <experiments>3</experiments>
</comment>
<comment type="interaction">
    <interactant intactId="EBI-702187">
        <id>P13647</id>
    </interactant>
    <interactant intactId="EBI-2125614">
        <id>Q9BVG8</id>
        <label>KIFC3</label>
    </interactant>
    <organismsDiffer>false</organismsDiffer>
    <experiments>3</experiments>
</comment>
<comment type="interaction">
    <interactant intactId="EBI-702187">
        <id>P13647</id>
    </interactant>
    <interactant intactId="EBI-14069005">
        <id>Q9BVG8-5</id>
        <label>KIFC3</label>
    </interactant>
    <organismsDiffer>false</organismsDiffer>
    <experiments>3</experiments>
</comment>
<comment type="interaction">
    <interactant intactId="EBI-702187">
        <id>P13647</id>
    </interactant>
    <interactant intactId="EBI-702178">
        <id>P02533</id>
        <label>KRT14</label>
    </interactant>
    <organismsDiffer>false</organismsDiffer>
    <experiments>8</experiments>
</comment>
<comment type="interaction">
    <interactant intactId="EBI-702187">
        <id>P13647</id>
    </interactant>
    <interactant intactId="EBI-739566">
        <id>P19012</id>
        <label>KRT15</label>
    </interactant>
    <organismsDiffer>false</organismsDiffer>
    <experiments>6</experiments>
</comment>
<comment type="interaction">
    <interactant intactId="EBI-702187">
        <id>P13647</id>
    </interactant>
    <interactant intactId="EBI-356410">
        <id>P08779</id>
        <label>KRT16</label>
    </interactant>
    <organismsDiffer>false</organismsDiffer>
    <experiments>3</experiments>
</comment>
<comment type="interaction">
    <interactant intactId="EBI-702187">
        <id>P13647</id>
    </interactant>
    <interactant intactId="EBI-742756">
        <id>P08727</id>
        <label>KRT19</label>
    </interactant>
    <organismsDiffer>false</organismsDiffer>
    <experiments>3</experiments>
</comment>
<comment type="interaction">
    <interactant intactId="EBI-702187">
        <id>P13647</id>
    </interactant>
    <interactant intactId="EBI-2952736">
        <id>Q2M2I5</id>
        <label>KRT24</label>
    </interactant>
    <organismsDiffer>false</organismsDiffer>
    <experiments>3</experiments>
</comment>
<comment type="interaction">
    <interactant intactId="EBI-702187">
        <id>P13647</id>
    </interactant>
    <interactant intactId="EBI-11980019">
        <id>Q7Z3Z0</id>
        <label>KRT25</label>
    </interactant>
    <organismsDiffer>false</organismsDiffer>
    <experiments>3</experiments>
</comment>
<comment type="interaction">
    <interactant intactId="EBI-702187">
        <id>P13647</id>
    </interactant>
    <interactant intactId="EBI-3044087">
        <id>Q7Z3Y8</id>
        <label>KRT27</label>
    </interactant>
    <organismsDiffer>false</organismsDiffer>
    <experiments>3</experiments>
</comment>
<comment type="interaction">
    <interactant intactId="EBI-702187">
        <id>P13647</id>
    </interactant>
    <interactant intactId="EBI-11980489">
        <id>Q7Z3Y7</id>
        <label>KRT28</label>
    </interactant>
    <organismsDiffer>false</organismsDiffer>
    <experiments>3</experiments>
</comment>
<comment type="interaction">
    <interactant intactId="EBI-702187">
        <id>P13647</id>
    </interactant>
    <interactant intactId="EBI-948001">
        <id>Q15323</id>
        <label>KRT31</label>
    </interactant>
    <organismsDiffer>false</organismsDiffer>
    <experiments>6</experiments>
</comment>
<comment type="interaction">
    <interactant intactId="EBI-702187">
        <id>P13647</id>
    </interactant>
    <interactant intactId="EBI-1058674">
        <id>Q92764</id>
        <label>KRT35</label>
    </interactant>
    <organismsDiffer>false</organismsDiffer>
    <experiments>3</experiments>
</comment>
<comment type="interaction">
    <interactant intactId="EBI-702187">
        <id>P13647</id>
    </interactant>
    <interactant intactId="EBI-1047263">
        <id>O76015</id>
        <label>KRT38</label>
    </interactant>
    <organismsDiffer>false</organismsDiffer>
    <experiments>6</experiments>
</comment>
<comment type="interaction">
    <interactant intactId="EBI-702187">
        <id>P13647</id>
    </interactant>
    <interactant intactId="EBI-10171697">
        <id>Q6A162</id>
        <label>KRT40</label>
    </interactant>
    <organismsDiffer>false</organismsDiffer>
    <experiments>6</experiments>
</comment>
<comment type="interaction">
    <interactant intactId="EBI-702187">
        <id>P13647</id>
    </interactant>
    <interactant intactId="EBI-9087684">
        <id>Q13835-2</id>
        <label>PKP1</label>
    </interactant>
    <organismsDiffer>false</organismsDiffer>
    <experiments>2</experiments>
</comment>
<comment type="interaction">
    <interactant intactId="EBI-702187">
        <id>P13647</id>
    </interactant>
    <interactant intactId="EBI-702370">
        <id>Q14134</id>
        <label>TRIM29</label>
    </interactant>
    <organismsDiffer>false</organismsDiffer>
    <experiments>2</experiments>
</comment>
<comment type="subcellular location">
    <subcellularLocation>
        <location evidence="27">Cytoplasm</location>
    </subcellularLocation>
</comment>
<comment type="tissue specificity">
    <text evidence="27 41 44">Expressed in corneal epithelium (at protein level) (PubMed:26758872). Expressed in keratinocytes (at protein level) (PubMed:20128788, PubMed:31302245).</text>
</comment>
<comment type="PTM">
    <text evidence="2">Phosphorylated by CDK1, AURKB and Rho-kinase, phosphorylation is regulated by the cell cycle (By similarity). Thr-24 phosphorylation, mediated by CDK1, peaks during prometaphase or metaphase cells with phosphorylated filamentous structures evident throughout the cytoplasm during early mitosis (By similarity). CDK1 phosphorylates Thr-24 in mitotic cells at the site of injury (By similarity).</text>
</comment>
<comment type="PTM">
    <text evidence="2">O-glycosylated.</text>
</comment>
<comment type="disease" evidence="6 12 15 22 23 26 27 28 30 40 53 56 57 60 61">
    <disease id="DI-06251">
        <name>Epidermolysis bullosa simplex 2A, generalized severe</name>
        <acronym>EBS2A</acronym>
        <description>A form of epidermolysis bullosa simplex, a group of skin fragility disorders characterized by skin blistering due to cleavage within the basal layer of keratinocytes, and erosions caused by minor mechanical trauma. There is a broad spectrum of clinical severity ranging from minor blistering on the feet, to subtypes with extracutaneous involvement and a lethal outcome. EBS2A is an autosomal dominant, severe form characterized by extensive intraepidermal blistering from the time of birth with herpetiform marginal spreading and central healing. Oral mucosal involvement, nail dystrophy, onychogryposis, formation of milia, and palmoplantar hyperkeratosis are common features.</description>
        <dbReference type="MIM" id="619555"/>
    </disease>
    <text>The disease is caused by variants affecting the gene represented in this entry.</text>
</comment>
<comment type="disease" evidence="10 23 24 28 30 34 40 48 50 58 60">
    <disease id="DI-06252">
        <name>Epidermolysis bullosa simplex 2B, generalized intermediate</name>
        <acronym>EBS2B</acronym>
        <description>A form of epidermolysis bullosa simplex, a group of skin fragility disorders characterized by skin blistering due to cleavage within the basal layer of keratinocytes, and erosions caused by minor mechanical trauma. There is a broad spectrum of clinical severity ranging from minor blistering on the feet, to subtypes with extracutaneous involvement and a lethal outcome. EBS2B is an autosomal dominant form characterized by generalized blistering manifesting at birth. The tendency to blistering diminishes in adolescence, when it may become localized to hands and feet.</description>
        <dbReference type="MIM" id="619588"/>
    </disease>
    <text>The disease is caused by variants affecting the gene represented in this entry.</text>
</comment>
<comment type="disease" evidence="7 11 12 13 16 17 18 22 23 25 28 30 40 43 46 47 51 52 55 59">
    <disease id="DI-06253">
        <name>Epidermolysis bullosa simplex 2C, localized</name>
        <acronym>EBS2C</acronym>
        <description>A form of epidermolysis bullosa simplex, a group of skin fragility disorders characterized by skin blistering due to cleavage within the basal layer of keratinocytes, and erosions caused by minor mechanical trauma. There is a broad spectrum of clinical severity ranging from minor blistering on the feet, to subtypes with extracutaneous involvement and a lethal outcome. EBS2C is an autosomal dominant form with intraepidermal blistering mainly restricted to hands and feet beginning in infancy. Nails may be thick and dystrophic.</description>
        <dbReference type="MIM" id="619594"/>
    </disease>
    <text>The disease is caused by variants affecting the gene represented in this entry.</text>
</comment>
<comment type="disease" evidence="11 33 44">
    <disease id="DI-06254">
        <name>Epidermolysis bullosa simplex 2D, generalized, intermediate or severe, autosomal recessive</name>
        <acronym>EBS2D</acronym>
        <description>A form of epidermolysis bullosa simplex, a group of skin fragility disorders characterized by skin blistering due to cleavage within the basal layer of keratinocytes, and erosions caused by minor mechanical trauma. There is a broad spectrum of clinical severity ranging from minor blistering on the feet, to subtypes with extracutaneous involvement and a lethal outcome. EBS2D is an autosomal recessive form characterized by widespread intraepidermal skin blistering and erosions from birth. Death may occur in the neonatal period.</description>
        <dbReference type="MIM" id="619599"/>
    </disease>
    <text>The disease is caused by variants affecting the gene represented in this entry.</text>
</comment>
<comment type="disease" evidence="14">
    <disease id="DI-00466">
        <name>Epidermolysis bullosa simplex 2E, with migratory circinate erythema</name>
        <acronym>EBS2E</acronym>
        <description>A form of epidermolysis bullosa simplex, a group of skin fragility disorders characterized by skin blistering due to cleavage within the basal layer of keratinocytes, and erosions caused by minor mechanical trauma. There is a broad spectrum of clinical severity ranging from minor blistering on the feet, to subtypes with extracutaneous involvement and a lethal outcome. EBS2E is an autosomal dominant form in which multiple vesicles are present from birth onward and acquire over time a typical migratory circinate pattern on an erythematous background. Postinflammatory hyperpigmentation develops gradually and may have a mottled pattern.</description>
        <dbReference type="MIM" id="609352"/>
    </disease>
    <text>The disease is caused by variants affecting the gene represented in this entry.</text>
</comment>
<comment type="disease" evidence="5 23 28 30 40 54">
    <disease id="DI-00467">
        <name>Epidermolysis bullosa simplex 2F, with mottled pigmentation</name>
        <acronym>EBS2F</acronym>
        <description>A form of epidermolysis bullosa simplex, a group of skin fragility disorders characterized by skin blistering due to cleavage within the basal layer of keratinocytes, and erosions caused by minor mechanical trauma. There is a broad spectrum of clinical severity ranging from minor blistering on the feet, to subtypes with extracutaneous involvement and a lethal outcome. EBS2F is an autosomal dominant form characterized by generalized skin blistering of intermediate severity beginning at birth, with mottled or reticulate pigmentation developing gradually. Focal keratoses of palms and soles and dystrophic, thickened nails develop over time.</description>
        <dbReference type="MIM" id="131960"/>
    </disease>
    <text>The disease is caused by variants affecting the gene represented in this entry.</text>
</comment>
<comment type="disease" evidence="21 29 31">
    <disease id="DI-01503">
        <name>Dowling-Degos disease 1</name>
        <acronym>DDD1</acronym>
        <description>An autosomal dominant genodermatosis. Affected individuals develop a postpubertal reticulate hyperpigmentation that is progressive and disfiguring, and small hyperkeratotic dark brown papules that affect mainly the flexures and great skin folds. Patients usually show no abnormalities of the hair or nails.</description>
        <dbReference type="MIM" id="179850"/>
    </disease>
    <text>The disease is caused by variants affecting the gene represented in this entry.</text>
</comment>
<comment type="miscellaneous">
    <text>There are two types of cytoskeletal and microfibrillar keratin: I (acidic; 40-55 kDa) and II (neutral to basic; 56-70 kDa).</text>
</comment>
<comment type="similarity">
    <text evidence="3">Belongs to the intermediate filament family.</text>
</comment>
<feature type="chain" id="PRO_0000063727" description="Keratin, type II cytoskeletal 5">
    <location>
        <begin position="1"/>
        <end position="590"/>
    </location>
</feature>
<feature type="domain" description="IF rod" evidence="3">
    <location>
        <begin position="168"/>
        <end position="481"/>
    </location>
</feature>
<feature type="region of interest" description="Head">
    <location>
        <begin position="1"/>
        <end position="167"/>
    </location>
</feature>
<feature type="region of interest" description="Disordered" evidence="4">
    <location>
        <begin position="1"/>
        <end position="20"/>
    </location>
</feature>
<feature type="region of interest" description="Coil 1A">
    <location>
        <begin position="168"/>
        <end position="203"/>
    </location>
</feature>
<feature type="region of interest" description="Linker 1">
    <location>
        <begin position="204"/>
        <end position="222"/>
    </location>
</feature>
<feature type="region of interest" description="Coil 1B">
    <location>
        <begin position="223"/>
        <end position="315"/>
    </location>
</feature>
<feature type="region of interest" description="Linker 12">
    <location>
        <begin position="316"/>
        <end position="338"/>
    </location>
</feature>
<feature type="region of interest" description="Coil 2">
    <location>
        <begin position="339"/>
        <end position="477"/>
    </location>
</feature>
<feature type="region of interest" description="Tail">
    <location>
        <begin position="478"/>
        <end position="590"/>
    </location>
</feature>
<feature type="region of interest" description="Disordered" evidence="4">
    <location>
        <begin position="566"/>
        <end position="590"/>
    </location>
</feature>
<feature type="compositionally biased region" description="Low complexity" evidence="4">
    <location>
        <begin position="1"/>
        <end position="18"/>
    </location>
</feature>
<feature type="compositionally biased region" description="Low complexity" evidence="4">
    <location>
        <begin position="572"/>
        <end position="590"/>
    </location>
</feature>
<feature type="site" description="Stutter">
    <location>
        <position position="419"/>
    </location>
</feature>
<feature type="modified residue" description="Phosphoserine" evidence="1">
    <location>
        <position position="5"/>
    </location>
</feature>
<feature type="modified residue" description="Phosphoserine" evidence="1">
    <location>
        <position position="8"/>
    </location>
</feature>
<feature type="modified residue" description="Phosphoserine" evidence="2">
    <location>
        <position position="16"/>
    </location>
</feature>
<feature type="modified residue" description="Phosphoserine" evidence="2">
    <location>
        <position position="21"/>
    </location>
</feature>
<feature type="modified residue" description="Phosphothreonine; by CDK1" evidence="2">
    <location>
        <position position="24"/>
    </location>
</feature>
<feature type="modified residue" description="Phosphoserine" evidence="2">
    <location>
        <position position="26"/>
    </location>
</feature>
<feature type="modified residue" description="Phosphoserine" evidence="1">
    <location>
        <position position="36"/>
    </location>
</feature>
<feature type="modified residue" description="Phosphoserine" evidence="2">
    <location>
        <position position="50"/>
    </location>
</feature>
<feature type="modified residue" description="Phosphoserine" evidence="2">
    <location>
        <position position="64"/>
    </location>
</feature>
<feature type="modified residue" description="Phosphoserine" evidence="1">
    <location>
        <position position="71"/>
    </location>
</feature>
<feature type="modified residue" description="Phosphoserine" evidence="1">
    <location>
        <position position="75"/>
    </location>
</feature>
<feature type="modified residue" description="Phosphoserine" evidence="1">
    <location>
        <position position="82"/>
    </location>
</feature>
<feature type="modified residue" description="Phosphothreonine; by CDK1" evidence="2">
    <location>
        <position position="151"/>
    </location>
</feature>
<feature type="sequence variant" id="VAR_086623" description="In DDD1." evidence="29">
    <location>
        <begin position="5"/>
        <end position="590"/>
    </location>
</feature>
<feature type="sequence variant" id="VAR_010453" description="In EBS2F; dbSNP:rs57499817." evidence="5 23 28 30 40 54">
    <original>P</original>
    <variation>L</variation>
    <location>
        <position position="25"/>
    </location>
</feature>
<feature type="sequence variant" id="VAR_028763" description="In dbSNP:rs1065115." evidence="9 37">
    <original>S</original>
    <variation>R</variation>
    <location>
        <position position="79"/>
    </location>
</feature>
<feature type="sequence variant" id="VAR_003871" description="In dbSNP:rs11170164." evidence="49">
    <original>G</original>
    <variation>E</variation>
    <location>
        <position position="138"/>
    </location>
</feature>
<feature type="sequence variant" id="VAR_086624" description="In EBS2B; dbSNP:rs59851104." evidence="40">
    <original>V</original>
    <variation>A</variation>
    <location>
        <position position="143"/>
    </location>
</feature>
<feature type="sequence variant" id="VAR_031640" description="In EBS2B; dbSNP:rs59851104." evidence="23">
    <original>V</original>
    <variation>D</variation>
    <location>
        <position position="143"/>
    </location>
</feature>
<feature type="sequence variant" id="VAR_086625" description="Found in a patient with EBS with an unspecified subtype; likely pathogenic; dbSNP:rs267607439." evidence="40">
    <original>V</original>
    <variation>F</variation>
    <location>
        <position position="143"/>
    </location>
</feature>
<feature type="sequence variant" id="VAR_086626" description="In EBS2A; uncertain significance." evidence="40">
    <location>
        <begin position="144"/>
        <end position="145"/>
    </location>
</feature>
<feature type="sequence variant" id="VAR_086627" description="In EBS2C; uncertain significance." evidence="40">
    <original>N</original>
    <variation>Y</variation>
    <location>
        <position position="146"/>
    </location>
</feature>
<feature type="sequence variant" id="VAR_086628" description="In EBS2C; uncertain significance; dbSNP:rs267607449." evidence="28">
    <original>L</original>
    <variation>P</variation>
    <location>
        <position position="149"/>
    </location>
</feature>
<feature type="sequence variant" id="VAR_086629" description="In EBS2B; uncertain significance; dbSNP:rs62635291." evidence="24">
    <original>L</original>
    <variation>P</variation>
    <location>
        <position position="150"/>
    </location>
</feature>
<feature type="sequence variant" id="VAR_086630" description="In EBS2C; uncertain significance; dbSNP:rs267607450." evidence="28">
    <original>T</original>
    <variation>P</variation>
    <location>
        <position position="151"/>
    </location>
</feature>
<feature type="sequence variant" id="VAR_010454" description="In EBS2C; dbSNP:rs60617604." evidence="59">
    <original>P</original>
    <variation>L</variation>
    <location>
        <position position="152"/>
    </location>
</feature>
<feature type="sequence variant" id="VAR_086631" description="In EBS2D; uncertain significance; dbSNP:rs763608512." evidence="44">
    <original>D</original>
    <variation>N</variation>
    <location>
        <position position="158"/>
    </location>
</feature>
<feature type="sequence variant" id="VAR_031641" description="In EBS2C; uncertain significance; dbSNP:rs61222761." evidence="23">
    <original>D</original>
    <variation>V</variation>
    <location>
        <position position="158"/>
    </location>
</feature>
<feature type="sequence variant" id="VAR_086632" description="In DDD1; uncertain significance." evidence="31">
    <original>P</original>
    <variation>L</variation>
    <location>
        <position position="159"/>
    </location>
</feature>
<feature type="sequence variant" id="VAR_003872" description="In EBS2C; dbSNP:rs58058996." evidence="51">
    <original>I</original>
    <variation>S</variation>
    <location>
        <position position="161"/>
    </location>
</feature>
<feature type="sequence variant" id="VAR_071630" description="In EBS2A; dbSNP:rs267607456." evidence="30">
    <original>R</original>
    <variation>S</variation>
    <location>
        <position position="165"/>
    </location>
</feature>
<feature type="sequence variant" id="VAR_026536" description="In EBS2C; dbSNP:rs57378129." evidence="13">
    <original>E</original>
    <variation>K</variation>
    <location>
        <position position="167"/>
    </location>
</feature>
<feature type="sequence variant" id="VAR_086633" description="In EBS2B; uncertain significance." evidence="34">
    <original>E</original>
    <variation>D</variation>
    <location>
        <position position="168"/>
    </location>
</feature>
<feature type="sequence variant" id="VAR_027722" description="In EBS2A; dbSNP:rs58619430." evidence="22">
    <original>E</original>
    <variation>K</variation>
    <location>
        <position position="168"/>
    </location>
</feature>
<feature type="sequence variant" id="VAR_027723" description="In EBS2A; dbSNP:rs60720877." evidence="22">
    <original>R</original>
    <variation>P</variation>
    <location>
        <position position="169"/>
    </location>
</feature>
<feature type="sequence variant" id="VAR_086634" description="In EBS2C; uncertain significance; dbSNP:rs57408864." evidence="28">
    <original>E</original>
    <variation>G</variation>
    <location>
        <position position="170"/>
    </location>
</feature>
<feature type="sequence variant" id="VAR_026537" description="In EBS2C, EBS2B and EBS2D; dbSNP:rs59115483." evidence="11 40 44">
    <original>E</original>
    <variation>K</variation>
    <location>
        <position position="170"/>
    </location>
</feature>
<feature type="sequence variant" id="VAR_010455" description="In EBS2B; dbSNP:rs58163069." evidence="48">
    <original>K</original>
    <variation>N</variation>
    <location>
        <position position="173"/>
    </location>
</feature>
<feature type="sequence variant" id="VAR_010456" description="In EBS2A; dbSNP:rs57890479." evidence="53">
    <original>L</original>
    <variation>F</variation>
    <location>
        <position position="175"/>
    </location>
</feature>
<feature type="sequence variant" id="VAR_010457" description="In EBS2A; dbSNP:rs59092197." evidence="23 56 60">
    <original>N</original>
    <variation>S</variation>
    <location>
        <position position="176"/>
    </location>
</feature>
<feature type="sequence variant" id="VAR_026538" description="In EBS2C; dbSNP:rs61495052." evidence="17 28">
    <original>N</original>
    <variation>S</variation>
    <location>
        <position position="177"/>
    </location>
</feature>
<feature type="sequence variant" id="VAR_010458" description="In EBS2A; dbSNP:rs57781042." evidence="56">
    <original>F</original>
    <variation>S</variation>
    <location>
        <position position="179"/>
    </location>
</feature>
<feature type="sequence variant" id="VAR_086635" description="In EBS2B; dbSNP:rs58480900." evidence="28">
    <original>A</original>
    <variation>D</variation>
    <location>
        <position position="180"/>
    </location>
</feature>
<feature type="sequence variant" id="VAR_086636" description="In EBS2A; uncertain significance; dbSNP:rs267607451." evidence="28">
    <original>A</original>
    <variation>P</variation>
    <location>
        <position position="180"/>
    </location>
</feature>
<feature type="sequence variant" id="VAR_010459" description="In EBS2A; with laryngeal involvement; dbSNP:rs60715293." evidence="6">
    <original>S</original>
    <variation>P</variation>
    <location>
        <position position="181"/>
    </location>
</feature>
<feature type="sequence variant" id="VAR_086637" description="In EBS2A; uncertain significance; dbSNP:rs267607443." evidence="27">
    <original>I</original>
    <variation>M</variation>
    <location>
        <position position="183"/>
    </location>
</feature>
<feature type="sequence variant" id="VAR_086638" description="In EBS2D; dbSNP:rs267607661." evidence="33">
    <original>I</original>
    <variation>T</variation>
    <location>
        <position position="183"/>
    </location>
</feature>
<feature type="sequence variant" id="VAR_071631" description="In EBS2C; dbSNP:rs267607457." evidence="30">
    <original>V</original>
    <variation>E</variation>
    <location>
        <position position="186"/>
    </location>
</feature>
<feature type="sequence variant" id="VAR_013829" description="In EBS2B; dbSNP:rs121912475." evidence="10 23">
    <original>V</original>
    <variation>L</variation>
    <location>
        <position position="186"/>
    </location>
</feature>
<feature type="sequence variant" id="VAR_031642" description="In EBS2B; uncertain significance; dbSNP:rs121912475." evidence="23 40">
    <original>V</original>
    <variation>M</variation>
    <location>
        <position position="186"/>
    </location>
</feature>
<feature type="sequence variant" id="VAR_086639" description="In EBS2C; uncertain significance; dbSNP:rs267607452." evidence="28">
    <original>R</original>
    <variation>P</variation>
    <location>
        <position position="187"/>
    </location>
</feature>
<feature type="sequence variant" id="VAR_027724" description="In EBS2C; uncertain significance; also found in a patient with epidermolysis bullosa simplex with unspecified subtype; uncertain significance; requires 2 nucleotide substitutions; dbSNP:rs58976397." evidence="22 40">
    <original>E</original>
    <variation>K</variation>
    <location>
        <position position="190"/>
    </location>
</feature>
<feature type="sequence variant" id="VAR_031643" description="In EBS2B and EBS2A; uncertain significance; dbSNP:rs57751134." evidence="23 28">
    <original>Q</original>
    <variation>P</variation>
    <location>
        <position position="191"/>
    </location>
</feature>
<feature type="sequence variant" id="VAR_003873" description="In EBS2A and EBS2C; dbSNP:rs60586163." evidence="30 55 61">
    <original>N</original>
    <variation>K</variation>
    <location>
        <position position="193"/>
    </location>
</feature>
<feature type="sequence variant" id="VAR_028764" description="In dbSNP:rs641615." evidence="35 38">
    <original>D</original>
    <variation>E</variation>
    <location>
        <position position="197"/>
    </location>
</feature>
<feature type="sequence variant" id="VAR_086640" description="In EBS2C; uncertain significance; dbSNP:rs267607435." evidence="25">
    <original>T</original>
    <variation>S</variation>
    <location>
        <position position="198"/>
    </location>
</feature>
<feature type="sequence variant" id="VAR_086641" description="In EBS2C; uncertain significance; dbSNP:rs58766676." evidence="28">
    <original>K</original>
    <variation>M</variation>
    <location>
        <position position="199"/>
    </location>
</feature>
<feature type="sequence variant" id="VAR_026539" description="In EBS2C; dbSNP:rs58766676." evidence="16">
    <original>K</original>
    <variation>T</variation>
    <location>
        <position position="199"/>
    </location>
</feature>
<feature type="sequence variant" id="VAR_086642" description="Found in a patient with epidermolysis bullosa simplex with unspecified subtype; uncertain significance." evidence="40">
    <original>L</original>
    <variation>M</variation>
    <location>
        <position position="203"/>
    </location>
</feature>
<feature type="sequence variant" id="VAR_028765" description="In dbSNP:rs200333163.">
    <original>S</original>
    <variation>N</variation>
    <location>
        <position position="232"/>
    </location>
</feature>
<feature type="sequence variant" id="VAR_026540" description="In EBS2C; dbSNP:rs59864957." evidence="13">
    <original>L</original>
    <variation>P</variation>
    <location>
        <position position="311"/>
    </location>
</feature>
<feature type="sequence variant" id="VAR_071632" description="In EBS2C; dbSNP:rs1938635857." evidence="30">
    <original>T</original>
    <variation>P</variation>
    <location>
        <position position="321"/>
    </location>
</feature>
<feature type="sequence variant" id="VAR_010460" description="In EBS2B; dbSNP:rs59840738." evidence="58">
    <original>V</original>
    <variation>A</variation>
    <location>
        <position position="323"/>
    </location>
</feature>
<feature type="sequence variant" id="VAR_086643" description="In EBS2C." evidence="28">
    <original>V</original>
    <variation>G</variation>
    <location>
        <position position="323"/>
    </location>
</feature>
<feature type="sequence variant" id="VAR_026541" description="In EBS2C; dbSNP:rs59335325." evidence="13">
    <original>V</original>
    <variation>D</variation>
    <location>
        <position position="324"/>
    </location>
</feature>
<feature type="sequence variant" id="VAR_086644" description="In EBS2C." evidence="40">
    <original>L</original>
    <variation>F</variation>
    <location>
        <position position="325"/>
    </location>
</feature>
<feature type="sequence variant" id="VAR_010461" description="In EBS2B; dbSNP:rs58107458." evidence="60">
    <original>L</original>
    <variation>P</variation>
    <location>
        <position position="325"/>
    </location>
</feature>
<feature type="sequence variant" id="VAR_010462" description="In EBS2C; dbSNP:rs58072617." evidence="59">
    <original>M</original>
    <variation>K</variation>
    <location>
        <position position="327"/>
    </location>
</feature>
<feature type="sequence variant" id="VAR_003874" description="In EBS2C; dbSNP:rs58072617." evidence="47 55">
    <original>M</original>
    <variation>T</variation>
    <location>
        <position position="327"/>
    </location>
</feature>
<feature type="sequence variant" id="VAR_026542" description="In EBS2C; dbSNP:rs59464425." evidence="7">
    <original>D</original>
    <variation>E</variation>
    <location>
        <position position="328"/>
    </location>
</feature>
<feature type="sequence variant" id="VAR_026543" description="In EBS2C; dbSNP:rs57142010." evidence="18">
    <original>D</original>
    <variation>G</variation>
    <location>
        <position position="328"/>
    </location>
</feature>
<feature type="sequence variant" id="VAR_010463" description="In EBS2C; dbSNP:rs56790237." evidence="59">
    <original>D</original>
    <variation>H</variation>
    <location>
        <position position="328"/>
    </location>
</feature>
<feature type="sequence variant" id="VAR_010464" description="In EBS2C; dbSNP:rs57142010." evidence="30 52">
    <original>D</original>
    <variation>V</variation>
    <location>
        <position position="328"/>
    </location>
</feature>
<feature type="sequence variant" id="VAR_010465" description="In EBS2C; dbSNP:rs59730172." evidence="28 47">
    <original>N</original>
    <variation>K</variation>
    <location>
        <position position="329"/>
    </location>
</feature>
<feature type="sequence variant" id="VAR_003875" description="In EBS2C; dbSNP:rs61297109." evidence="46">
    <original>R</original>
    <variation>C</variation>
    <location>
        <position position="331"/>
    </location>
</feature>
<feature type="sequence variant" id="VAR_027725" description="In EBS2C; dbSNP:rs56729325." evidence="22 28">
    <original>R</original>
    <variation>H</variation>
    <location>
        <position position="331"/>
    </location>
</feature>
<feature type="sequence variant" id="VAR_031644" description="In EBS2C; dbSNP:rs59112594." evidence="23">
    <original>R</original>
    <variation>S</variation>
    <location>
        <position position="352"/>
    </location>
</feature>
<feature type="sequence variant" id="VAR_028766" description="In dbSNP:rs2669875." evidence="9 37">
    <original>S</original>
    <variation>T</variation>
    <location>
        <position position="387"/>
    </location>
</feature>
<feature type="sequence variant" id="VAR_023726" description="In EBS2C; uncertain significance; dbSNP:rs60809982." evidence="12 28">
    <original>K</original>
    <variation>E</variation>
    <location>
        <position position="404"/>
    </location>
</feature>
<feature type="sequence variant" id="VAR_086645" description="In EBS2D; dbSNP:rs121912476." evidence="11">
    <original>E</original>
    <variation>K</variation>
    <location>
        <position position="418"/>
    </location>
</feature>
<feature type="sequence variant" id="VAR_086646" description="In EBS2C." evidence="43">
    <original>A</original>
    <variation>D</variation>
    <location>
        <position position="428"/>
    </location>
</feature>
<feature type="sequence variant" id="VAR_071633" description="In EBS2C; dbSNP:rs267607458." evidence="30">
    <original>A</original>
    <variation>T</variation>
    <location>
        <position position="428"/>
    </location>
</feature>
<feature type="sequence variant" id="VAR_023727" description="In EBS2C and EBS2B; uncertain significance; dbSNP:rs57845028." evidence="12 28">
    <original>A</original>
    <variation>D</variation>
    <location>
        <position position="438"/>
    </location>
</feature>
<feature type="sequence variant" id="VAR_086647" description="In EBS2C; uncertain significance; dbSNP:rs267607453." evidence="28">
    <original>K</original>
    <variation>N</variation>
    <location>
        <position position="443"/>
    </location>
</feature>
<feature type="sequence variant" id="VAR_003876" description="In EBS2B; dbSNP:rs57599352." evidence="30 50">
    <original>L</original>
    <variation>P</variation>
    <location>
        <position position="463"/>
    </location>
</feature>
<feature type="sequence variant" id="VAR_086648" description="In EBS2B; uncertain significance; dbSNP:rs62642056." evidence="24">
    <original>E</original>
    <variation>D</variation>
    <location>
        <position position="466"/>
    </location>
</feature>
<feature type="sequence variant" id="VAR_086649" description="In EBS2A;; dbSNP:rs60062350." evidence="28">
    <original>I</original>
    <variation>M</variation>
    <location>
        <position position="467"/>
    </location>
</feature>
<feature type="sequence variant" id="VAR_010466" description="In EBS2A; dbSNP:rs60271599." evidence="57">
    <original>I</original>
    <variation>T</variation>
    <location>
        <position position="467"/>
    </location>
</feature>
<feature type="sequence variant" id="VAR_027726" description="In EBS2A; dbSNP:rs60596287." evidence="22">
    <original>T</original>
    <variation>P</variation>
    <location>
        <position position="469"/>
    </location>
</feature>
<feature type="sequence variant" id="VAR_086650" description="Found in a patient with EBS with an unspecified subtype; likely pathogenic." evidence="40">
    <location>
        <begin position="470"/>
        <end position="590"/>
    </location>
</feature>
<feature type="sequence variant" id="VAR_086651" description="In EBS2C; uncertain significance; dbSNP:rs895084041." evidence="40">
    <original>R</original>
    <variation>H</variation>
    <location>
        <position position="471"/>
    </location>
</feature>
<feature type="sequence variant" id="VAR_003877" description="In EBS2A; dbSNP:rs61348633." evidence="15 27">
    <original>E</original>
    <variation>G</variation>
    <location>
        <position position="475"/>
    </location>
</feature>
<feature type="sequence variant" id="VAR_023728" description="In EBS2B; dbSNP:rs57155193." evidence="12 23 28">
    <original>E</original>
    <variation>K</variation>
    <location>
        <position position="475"/>
    </location>
</feature>
<feature type="sequence variant" id="VAR_086652" description="In EBS2C; uncertain significance; dbSNP:rs56922686." evidence="28 40">
    <original>G</original>
    <variation>D</variation>
    <location>
        <position position="476"/>
    </location>
</feature>
<feature type="sequence variant" id="VAR_086653" description="Found in a patient with epidermolysis bullosa simplex with unspecified subtype; uncertain significance; dbSNP:rs58319159." evidence="40">
    <original>E</original>
    <variation>G</variation>
    <location>
        <position position="477"/>
    </location>
</feature>
<feature type="sequence variant" id="VAR_010467" description="In EBS2A; dbSNP:rs59190510." evidence="12 23 30 56">
    <original>E</original>
    <variation>K</variation>
    <location>
        <position position="477"/>
    </location>
</feature>
<feature type="sequence variant" id="VAR_086654" description="In EBS2A; uncertain significance; dbSNP:rs267607438." evidence="26">
    <original>E</original>
    <variation>K</variation>
    <location>
        <position position="478"/>
    </location>
</feature>
<feature type="sequence variant" id="VAR_031645" description="In EBS2B; dbSNP:rs58608695." evidence="23">
    <original>G</original>
    <variation>D</variation>
    <location>
        <position position="517"/>
    </location>
</feature>
<feature type="sequence variant" id="VAR_028767" description="In dbSNP:rs11549950." evidence="19">
    <original>S</original>
    <variation>G</variation>
    <location>
        <position position="528"/>
    </location>
</feature>
<feature type="sequence variant" id="VAR_028768" description="In dbSNP:rs11549949." evidence="19 36">
    <original>G</original>
    <variation>S</variation>
    <location>
        <position position="543"/>
    </location>
</feature>
<feature type="mutagenesis site" description="Increase in keratin-positive aggregates and keratin intermediate filament networks that are very thin and sparse with short filaments." evidence="45">
    <original>E</original>
    <variation>A</variation>
    <location>
        <position position="399"/>
    </location>
</feature>
<feature type="mutagenesis site" description="No effect on interaction with KRT14 or keratin intermediate filament networks." evidence="45">
    <original>Q</original>
    <variation>A</variation>
    <location>
        <position position="411"/>
    </location>
</feature>
<feature type="mutagenesis site" description="No effect on interaction with KRT14 or keratin intermediate filament networks." evidence="45">
    <original>N</original>
    <variation>A</variation>
    <location>
        <position position="412"/>
    </location>
</feature>
<feature type="mutagenesis site" description="No effect on interaction with KRT14 or keratin intermediate filament networks." evidence="45">
    <original>E</original>
    <variation>A</variation>
    <location>
        <position position="422"/>
    </location>
</feature>
<feature type="mutagenesis site" description="No effect on interaction with KRT14 or keratin intermediate filament networks." evidence="45">
    <original>E</original>
    <variation>A</variation>
    <location>
        <position position="437"/>
    </location>
</feature>
<feature type="mutagenesis site" description="No effect on interaction with KRT14 or keratin intermediate filament networks." evidence="45">
    <original>Q</original>
    <variation>A</variation>
    <location>
        <position position="440"/>
    </location>
</feature>
<feature type="mutagenesis site" description="No effect on interaction with KRT14 or keratin intermediate filament networks." evidence="45">
    <original>Q</original>
    <variation>A</variation>
    <location>
        <position position="444"/>
    </location>
</feature>
<feature type="sequence conflict" description="In Ref. 2." evidence="62" ref="2">
    <original>FRS</original>
    <variation>SGA</variation>
    <location>
        <begin position="9"/>
        <end position="11"/>
    </location>
</feature>
<feature type="sequence conflict" description="In Ref. 5; AAA36145." evidence="62" ref="5">
    <original>E</original>
    <variation>Q</variation>
    <location>
        <position position="261"/>
    </location>
</feature>
<feature type="sequence conflict" description="In Ref. 5; AAA36145." evidence="62" ref="5">
    <original>E</original>
    <variation>H</variation>
    <location>
        <position position="271"/>
    </location>
</feature>
<feature type="sequence conflict" description="In Ref. 7." evidence="62" ref="7">
    <original>H</original>
    <variation>E</variation>
    <location>
        <position position="375"/>
    </location>
</feature>
<feature type="sequence conflict" description="In Ref. 2 and 5; AAA36145." evidence="62" ref="2 5">
    <original>G</original>
    <variation>S</variation>
    <location>
        <position position="558"/>
    </location>
</feature>
<feature type="helix" evidence="65">
    <location>
        <begin position="384"/>
        <end position="474"/>
    </location>
</feature>
<proteinExistence type="evidence at protein level"/>
<accession>P13647</accession>
<accession>Q6PI71</accession>
<accession>Q6UBJ0</accession>
<accession>Q8TA91</accession>
<sequence>MSRQSSVSFRSGGSRSFSTASAITPSVSRTSFTSVSRSGGGGGGGFGRVSLAGACGVGGYGSRSLYNLGGSKRISISTSGGSFRNRFGAGAGGGYGFGGGAGSGFGFGGGAGGGFGLGGGAGFGGGFGGPGFPVCPPGGIQEVTVNQSLLTPLNLQIDPSIQRVRTEEREQIKTLNNKFASFIDKVRFLEQQNKVLDTKWTLLQEQGTKTVRQNLEPLFEQYINNLRRQLDSIVGERGRLDSELRNMQDLVEDFKNKYEDEINKRTTAENEFVMLKKDVDAAYMNKVELEAKVDALMDEINFMKMFFDAELSQMQTHVSDTSVVLSMDNNRNLDLDSIIAEVKAQYEEIANRSRTEAESWYQTKYEELQQTAGRHGDDLRNTKHEISEMNRMIQRLRAEIDNVKKQCANLQNAIADAEQRGELALKDARNKLAELEEALQKAKQDMARLLREYQELMNTKLALDVEIATYRKLLEGEECRLSGEGVGPVNISVVTSSVSSGYGSGSGYGGGLGGGLGGGLGGGLAGGSSGSYYSSSSGGVGLGGGLSVGGSGFSASSGRGLGVGFGSGGGSSSSVKFVSTTSSSRKSFKS</sequence>
<keyword id="KW-0002">3D-structure</keyword>
<keyword id="KW-0175">Coiled coil</keyword>
<keyword id="KW-0963">Cytoplasm</keyword>
<keyword id="KW-0225">Disease variant</keyword>
<keyword id="KW-0263">Epidermolysis bullosa</keyword>
<keyword id="KW-0403">Intermediate filament</keyword>
<keyword id="KW-0416">Keratin</keyword>
<keyword id="KW-0597">Phosphoprotein</keyword>
<keyword id="KW-1267">Proteomics identification</keyword>
<keyword id="KW-1185">Reference proteome</keyword>
<gene>
    <name type="primary">KRT5</name>
</gene>